<organism>
    <name type="scientific">Escherichia coli (strain K12)</name>
    <dbReference type="NCBI Taxonomy" id="83333"/>
    <lineage>
        <taxon>Bacteria</taxon>
        <taxon>Pseudomonadati</taxon>
        <taxon>Pseudomonadota</taxon>
        <taxon>Gammaproteobacteria</taxon>
        <taxon>Enterobacterales</taxon>
        <taxon>Enterobacteriaceae</taxon>
        <taxon>Escherichia</taxon>
    </lineage>
</organism>
<sequence>MPVIKVRENEPFDVALRRFKRSCEKAGVLAEVRRREFYEKPTTERKRAKASAVKRHAKKLARENARRTRLY</sequence>
<reference key="1">
    <citation type="journal article" date="1983" name="Cell">
        <title>The operon that encodes the sigma subunit of RNA polymerase also encodes ribosomal protein S21 and DNA primase in E. coli K12.</title>
        <authorList>
            <person name="Burton Z.F."/>
            <person name="Gross C.A."/>
            <person name="Watanabe K.K."/>
            <person name="Burgess R.R."/>
        </authorList>
    </citation>
    <scope>NUCLEOTIDE SEQUENCE [GENOMIC DNA]</scope>
    <source>
        <strain>K12</strain>
    </source>
</reference>
<reference key="2">
    <citation type="journal article" date="1983" name="Mol. Gen. Genet.">
        <title>Regulation of the rpsU-dnaG-rpoD macromolecular synthesis operon and the initiation of DNA replication in Escherichia coli K-12.</title>
        <authorList>
            <person name="Lupski J.R."/>
            <person name="Smiley B.L."/>
            <person name="Godson G.N."/>
        </authorList>
    </citation>
    <scope>NUCLEOTIDE SEQUENCE [GENOMIC DNA]</scope>
    <source>
        <strain>K12</strain>
    </source>
</reference>
<reference key="3">
    <citation type="journal article" date="1997" name="Science">
        <title>The complete genome sequence of Escherichia coli K-12.</title>
        <authorList>
            <person name="Blattner F.R."/>
            <person name="Plunkett G. III"/>
            <person name="Bloch C.A."/>
            <person name="Perna N.T."/>
            <person name="Burland V."/>
            <person name="Riley M."/>
            <person name="Collado-Vides J."/>
            <person name="Glasner J.D."/>
            <person name="Rode C.K."/>
            <person name="Mayhew G.F."/>
            <person name="Gregor J."/>
            <person name="Davis N.W."/>
            <person name="Kirkpatrick H.A."/>
            <person name="Goeden M.A."/>
            <person name="Rose D.J."/>
            <person name="Mau B."/>
            <person name="Shao Y."/>
        </authorList>
    </citation>
    <scope>NUCLEOTIDE SEQUENCE [LARGE SCALE GENOMIC DNA]</scope>
    <source>
        <strain>K12 / MG1655 / ATCC 47076</strain>
    </source>
</reference>
<reference key="4">
    <citation type="journal article" date="2006" name="Mol. Syst. Biol.">
        <title>Highly accurate genome sequences of Escherichia coli K-12 strains MG1655 and W3110.</title>
        <authorList>
            <person name="Hayashi K."/>
            <person name="Morooka N."/>
            <person name="Yamamoto Y."/>
            <person name="Fujita K."/>
            <person name="Isono K."/>
            <person name="Choi S."/>
            <person name="Ohtsubo E."/>
            <person name="Baba T."/>
            <person name="Wanner B.L."/>
            <person name="Mori H."/>
            <person name="Horiuchi T."/>
        </authorList>
    </citation>
    <scope>NUCLEOTIDE SEQUENCE [LARGE SCALE GENOMIC DNA]</scope>
    <source>
        <strain>K12 / W3110 / ATCC 27325 / DSM 5911</strain>
    </source>
</reference>
<reference key="5">
    <citation type="journal article" date="1975" name="Hoppe-Seyler's Z. Physiol. Chem.">
        <title>Determination of the complete amino acid sequence of protein S21 from Escherichia coli ribosomes.</title>
        <authorList>
            <person name="Vandekerckhove J."/>
            <person name="Rombauts W."/>
            <person name="Peeters B."/>
            <person name="Wittmann-Liebold B."/>
        </authorList>
    </citation>
    <scope>PROTEIN SEQUENCE OF 2-71</scope>
    <scope>SUBUNIT</scope>
    <source>
        <strain>K</strain>
    </source>
</reference>
<reference key="6">
    <citation type="journal article" date="1995" name="EMBO J.">
        <title>Protein-rRNA binding features and their structural and functional implications in ribosomes as determined by cross-linking studies.</title>
        <authorList>
            <person name="Urlaub H."/>
            <person name="Kruft V."/>
            <person name="Bischof O."/>
            <person name="Mueller E.-C."/>
            <person name="Wittmann-Liebold B."/>
        </authorList>
    </citation>
    <scope>PROTEIN SEQUENCE OF 26-35</scope>
    <scope>SUBUNIT</scope>
    <scope>CROSS-LINKING TO RRNA</scope>
    <source>
        <strain>MRE-600</strain>
    </source>
</reference>
<reference key="7">
    <citation type="journal article" date="1999" name="Anal. Biochem.">
        <title>Observation of Escherichia coli ribosomal proteins and their posttranslational modifications by mass spectrometry.</title>
        <authorList>
            <person name="Arnold R.J."/>
            <person name="Reilly J.P."/>
        </authorList>
    </citation>
    <scope>MASS SPECTROMETRY</scope>
    <scope>SUBUNIT</scope>
    <source>
        <strain>K12 / ATCC 25404 / DSM 5698 / NCIMB 11290</strain>
    </source>
</reference>
<reference key="8">
    <citation type="journal article" date="2014" name="Curr. Opin. Struct. Biol.">
        <title>A new system for naming ribosomal proteins.</title>
        <authorList>
            <person name="Ban N."/>
            <person name="Beckmann R."/>
            <person name="Cate J.H.D."/>
            <person name="Dinman J.D."/>
            <person name="Dragon F."/>
            <person name="Ellis S.R."/>
            <person name="Lafontaine D.L.J."/>
            <person name="Lindahl L."/>
            <person name="Liljas A."/>
            <person name="Lipton J.M."/>
            <person name="McAlear M.A."/>
            <person name="Moore P.B."/>
            <person name="Noller H.F."/>
            <person name="Ortega J."/>
            <person name="Panse V.G."/>
            <person name="Ramakrishnan V."/>
            <person name="Spahn C.M.T."/>
            <person name="Steitz T.A."/>
            <person name="Tchorzewski M."/>
            <person name="Tollervey D."/>
            <person name="Warren A.J."/>
            <person name="Williamson J.R."/>
            <person name="Wilson D."/>
            <person name="Yonath A."/>
            <person name="Yusupov M."/>
        </authorList>
    </citation>
    <scope>NOMENCLATURE</scope>
</reference>
<reference key="9">
    <citation type="journal article" date="2005" name="Science">
        <title>Structures of the bacterial ribosome at 3.5 A resolution.</title>
        <authorList>
            <person name="Schuwirth B.S."/>
            <person name="Borovinskaya M.A."/>
            <person name="Hau C.W."/>
            <person name="Zhang W."/>
            <person name="Vila-Sanjurjo A."/>
            <person name="Holton J.M."/>
            <person name="Cate J.H.D."/>
        </authorList>
    </citation>
    <scope>X-RAY CRYSTALLOGRAPHY (3.46 ANGSTROMS) OF 2 DIFFERENT RIBOSOME STRUCTURES</scope>
    <scope>SUBUNIT</scope>
    <source>
        <strain>MRE-600</strain>
    </source>
</reference>
<reference key="10">
    <citation type="journal article" date="2017" name="Nature">
        <title>Mechanistic insights into the alternative translation termination by ArfA and RF2.</title>
        <authorList>
            <person name="Ma C."/>
            <person name="Kurita D."/>
            <person name="Li N."/>
            <person name="Chen Y."/>
            <person name="Himeno H."/>
            <person name="Gao N."/>
        </authorList>
    </citation>
    <scope>STRUCTURE BY ELECTRON MICROSCOPY (3.0 ANGSTROMS) OF 70S RIBOSOME IN COMPLEX WITH ARFA AND RF2</scope>
    <scope>SUBUNIT</scope>
</reference>
<reference key="11">
    <citation type="journal article" date="2017" name="Nature">
        <title>Structural basis for ArfA-RF2-mediated translation termination on mRNAs lacking stop codons.</title>
        <authorList>
            <person name="Huter P."/>
            <person name="Mueller C."/>
            <person name="Beckert B."/>
            <person name="Arenz S."/>
            <person name="Berninghausen O."/>
            <person name="Beckmann R."/>
            <person name="Wilson D.N."/>
        </authorList>
    </citation>
    <scope>STRUCTURE BY ELECTRON MICROSCOPY (3.1 ANGSTROMS) OF 70S RIBOSOME IN COMPLEX WITH ARFA AND RF2</scope>
    <scope>SUBUNIT</scope>
</reference>
<reference key="12">
    <citation type="journal article" date="2016" name="Science">
        <title>Translational termination without a stop codon.</title>
        <authorList>
            <person name="James N.R."/>
            <person name="Brown A."/>
            <person name="Gordiyenko Y."/>
            <person name="Ramakrishnan V."/>
        </authorList>
    </citation>
    <scope>STRUCTURE BY ELECTRON MICROSCOPY (2.97 ANGSTROMS) OF 70S RIBOSOME IN COMPLEX WITH ARFA AND RF2</scope>
    <scope>SUBUNIT</scope>
</reference>
<reference key="13">
    <citation type="journal article" date="2017" name="Nature">
        <title>Structural basis of co-translational quality control by ArfA and RF2 bound to ribosome.</title>
        <authorList>
            <person name="Zeng F."/>
            <person name="Chen Y."/>
            <person name="Remis J."/>
            <person name="Shekhar M."/>
            <person name="Phillips J.C."/>
            <person name="Tajkhorshid E."/>
            <person name="Jin H."/>
        </authorList>
    </citation>
    <scope>STRUCTURE BY ELECTRON MICROSCOPY (3.52 ANGSTROMS) OF 70S RIBOSOME IN COMPLEX WITH ARFA AND RF2</scope>
    <scope>SUBUNIT</scope>
</reference>
<reference evidence="13" key="14">
    <citation type="journal article" date="2022" name="Nature">
        <title>Ribosome collisions induce mRNA cleavage and ribosome rescue in bacteria.</title>
        <authorList>
            <person name="Saito K."/>
            <person name="Kratzat H."/>
            <person name="Campbell A."/>
            <person name="Buschauer R."/>
            <person name="Burroughs A.M."/>
            <person name="Berninghausen O."/>
            <person name="Aravind L."/>
            <person name="Green R."/>
            <person name="Beckmann R."/>
            <person name="Buskirk A.R."/>
        </authorList>
    </citation>
    <scope>STRUCTURE BY ELECTRON MICROSCOPY (3.37 ANGSTROMS)</scope>
    <scope>PROBABLE FUNCTION</scope>
    <scope>INTERACTION WITH SMRB</scope>
    <source>
        <strain>K12 / MG1655 / ATCC 47076</strain>
    </source>
</reference>
<keyword id="KW-0002">3D-structure</keyword>
<keyword id="KW-0903">Direct protein sequencing</keyword>
<keyword id="KW-1185">Reference proteome</keyword>
<keyword id="KW-0687">Ribonucleoprotein</keyword>
<keyword id="KW-0689">Ribosomal protein</keyword>
<keyword id="KW-0694">RNA-binding</keyword>
<keyword id="KW-0699">rRNA-binding</keyword>
<feature type="initiator methionine" description="Removed" evidence="9">
    <location>
        <position position="1"/>
    </location>
</feature>
<feature type="chain" id="PRO_0000178332" description="Small ribosomal subunit protein bS21">
    <location>
        <begin position="2"/>
        <end position="71"/>
    </location>
</feature>
<feature type="region of interest" description="Disordered" evidence="1">
    <location>
        <begin position="43"/>
        <end position="71"/>
    </location>
</feature>
<feature type="compositionally biased region" description="Basic residues" evidence="1">
    <location>
        <begin position="46"/>
        <end position="59"/>
    </location>
</feature>
<feature type="compositionally biased region" description="Basic and acidic residues" evidence="1">
    <location>
        <begin position="60"/>
        <end position="71"/>
    </location>
</feature>
<feature type="strand" evidence="16">
    <location>
        <begin position="3"/>
        <end position="5"/>
    </location>
</feature>
<feature type="helix" evidence="16">
    <location>
        <begin position="12"/>
        <end position="26"/>
    </location>
</feature>
<feature type="helix" evidence="16">
    <location>
        <begin position="28"/>
        <end position="34"/>
    </location>
</feature>
<feature type="strand" evidence="15">
    <location>
        <begin position="36"/>
        <end position="38"/>
    </location>
</feature>
<feature type="helix" evidence="16">
    <location>
        <begin position="41"/>
        <end position="55"/>
    </location>
</feature>
<feature type="turn" evidence="14">
    <location>
        <begin position="58"/>
        <end position="60"/>
    </location>
</feature>
<feature type="turn" evidence="15">
    <location>
        <begin position="63"/>
        <end position="67"/>
    </location>
</feature>
<name>RS21_ECOLI</name>
<evidence type="ECO:0000256" key="1">
    <source>
        <dbReference type="SAM" id="MobiDB-lite"/>
    </source>
</evidence>
<evidence type="ECO:0000269" key="2">
    <source>
    </source>
</evidence>
<evidence type="ECO:0000269" key="3">
    <source>
    </source>
</evidence>
<evidence type="ECO:0000269" key="4">
    <source>
    </source>
</evidence>
<evidence type="ECO:0000269" key="5">
    <source>
    </source>
</evidence>
<evidence type="ECO:0000269" key="6">
    <source>
    </source>
</evidence>
<evidence type="ECO:0000269" key="7">
    <source>
    </source>
</evidence>
<evidence type="ECO:0000269" key="8">
    <source>
    </source>
</evidence>
<evidence type="ECO:0000269" key="9">
    <source>
    </source>
</evidence>
<evidence type="ECO:0000303" key="10">
    <source>
    </source>
</evidence>
<evidence type="ECO:0000305" key="11"/>
<evidence type="ECO:0000305" key="12">
    <source>
    </source>
</evidence>
<evidence type="ECO:0007744" key="13">
    <source>
        <dbReference type="PDB" id="7QGR"/>
    </source>
</evidence>
<evidence type="ECO:0007829" key="14">
    <source>
        <dbReference type="PDB" id="7BOD"/>
    </source>
</evidence>
<evidence type="ECO:0007829" key="15">
    <source>
        <dbReference type="PDB" id="8CAI"/>
    </source>
</evidence>
<evidence type="ECO:0007829" key="16">
    <source>
        <dbReference type="PDB" id="8CGJ"/>
    </source>
</evidence>
<dbReference type="EMBL" id="J01687">
    <property type="protein sequence ID" value="AAA24599.1"/>
    <property type="molecule type" value="Genomic_DNA"/>
</dbReference>
<dbReference type="EMBL" id="V00346">
    <property type="protein sequence ID" value="CAA23635.1"/>
    <property type="molecule type" value="Genomic_DNA"/>
</dbReference>
<dbReference type="EMBL" id="U28379">
    <property type="protein sequence ID" value="AAA89145.1"/>
    <property type="molecule type" value="Genomic_DNA"/>
</dbReference>
<dbReference type="EMBL" id="U00096">
    <property type="protein sequence ID" value="AAC76101.1"/>
    <property type="molecule type" value="Genomic_DNA"/>
</dbReference>
<dbReference type="EMBL" id="AP009048">
    <property type="protein sequence ID" value="BAE77116.1"/>
    <property type="molecule type" value="Genomic_DNA"/>
</dbReference>
<dbReference type="PIR" id="A02749">
    <property type="entry name" value="R3EC21"/>
</dbReference>
<dbReference type="RefSeq" id="NP_417537.1">
    <property type="nucleotide sequence ID" value="NC_000913.3"/>
</dbReference>
<dbReference type="RefSeq" id="WP_001144069.1">
    <property type="nucleotide sequence ID" value="NZ_STEB01000001.1"/>
</dbReference>
<dbReference type="PDB" id="2YKR">
    <property type="method" value="EM"/>
    <property type="resolution" value="9.80 A"/>
    <property type="chains" value="U=4-54"/>
</dbReference>
<dbReference type="PDB" id="3J9Y">
    <property type="method" value="EM"/>
    <property type="resolution" value="3.90 A"/>
    <property type="chains" value="u=1-71"/>
</dbReference>
<dbReference type="PDB" id="3J9Z">
    <property type="method" value="EM"/>
    <property type="resolution" value="3.60 A"/>
    <property type="chains" value="SU=2-71"/>
</dbReference>
<dbReference type="PDB" id="3JA1">
    <property type="method" value="EM"/>
    <property type="resolution" value="3.60 A"/>
    <property type="chains" value="SU=2-71"/>
</dbReference>
<dbReference type="PDB" id="3JBU">
    <property type="method" value="EM"/>
    <property type="resolution" value="3.64 A"/>
    <property type="chains" value="U=1-71"/>
</dbReference>
<dbReference type="PDB" id="3JBV">
    <property type="method" value="EM"/>
    <property type="resolution" value="3.32 A"/>
    <property type="chains" value="U=1-71"/>
</dbReference>
<dbReference type="PDB" id="3JCD">
    <property type="method" value="EM"/>
    <property type="resolution" value="3.70 A"/>
    <property type="chains" value="u=1-71"/>
</dbReference>
<dbReference type="PDB" id="3JCE">
    <property type="method" value="EM"/>
    <property type="resolution" value="3.20 A"/>
    <property type="chains" value="u=1-71"/>
</dbReference>
<dbReference type="PDB" id="3JCJ">
    <property type="method" value="EM"/>
    <property type="resolution" value="3.70 A"/>
    <property type="chains" value="2=1-71"/>
</dbReference>
<dbReference type="PDB" id="3JCN">
    <property type="method" value="EM"/>
    <property type="resolution" value="4.60 A"/>
    <property type="chains" value="w=1-71"/>
</dbReference>
<dbReference type="PDB" id="4A2I">
    <property type="method" value="EM"/>
    <property type="resolution" value="16.50 A"/>
    <property type="chains" value="U=4-54"/>
</dbReference>
<dbReference type="PDB" id="4ADV">
    <property type="method" value="EM"/>
    <property type="resolution" value="13.50 A"/>
    <property type="chains" value="U=1-71"/>
</dbReference>
<dbReference type="PDB" id="4U1U">
    <property type="method" value="X-ray"/>
    <property type="resolution" value="2.95 A"/>
    <property type="chains" value="AU/CU=4-54"/>
</dbReference>
<dbReference type="PDB" id="4U1V">
    <property type="method" value="X-ray"/>
    <property type="resolution" value="3.00 A"/>
    <property type="chains" value="AU/CU=4-54"/>
</dbReference>
<dbReference type="PDB" id="4U20">
    <property type="method" value="X-ray"/>
    <property type="resolution" value="2.90 A"/>
    <property type="chains" value="AU/CU=4-54"/>
</dbReference>
<dbReference type="PDB" id="4U24">
    <property type="method" value="X-ray"/>
    <property type="resolution" value="2.90 A"/>
    <property type="chains" value="AU/CU=4-54"/>
</dbReference>
<dbReference type="PDB" id="4U25">
    <property type="method" value="X-ray"/>
    <property type="resolution" value="2.90 A"/>
    <property type="chains" value="AU/CU=4-54"/>
</dbReference>
<dbReference type="PDB" id="4U26">
    <property type="method" value="X-ray"/>
    <property type="resolution" value="2.80 A"/>
    <property type="chains" value="AU/CU=4-54"/>
</dbReference>
<dbReference type="PDB" id="4U27">
    <property type="method" value="X-ray"/>
    <property type="resolution" value="2.80 A"/>
    <property type="chains" value="AU/CU=4-54"/>
</dbReference>
<dbReference type="PDB" id="4V4H">
    <property type="method" value="X-ray"/>
    <property type="resolution" value="3.46 A"/>
    <property type="chains" value="AU/CU=1-71"/>
</dbReference>
<dbReference type="PDB" id="4V4Q">
    <property type="method" value="X-ray"/>
    <property type="resolution" value="3.46 A"/>
    <property type="chains" value="AU/CU=1-71"/>
</dbReference>
<dbReference type="PDB" id="4V50">
    <property type="method" value="X-ray"/>
    <property type="resolution" value="3.22 A"/>
    <property type="chains" value="AU/CU=2-71"/>
</dbReference>
<dbReference type="PDB" id="4V52">
    <property type="method" value="X-ray"/>
    <property type="resolution" value="3.21 A"/>
    <property type="chains" value="AU/CU=2-71"/>
</dbReference>
<dbReference type="PDB" id="4V53">
    <property type="method" value="X-ray"/>
    <property type="resolution" value="3.54 A"/>
    <property type="chains" value="AU/CU=2-71"/>
</dbReference>
<dbReference type="PDB" id="4V54">
    <property type="method" value="X-ray"/>
    <property type="resolution" value="3.30 A"/>
    <property type="chains" value="AU/CU=2-71"/>
</dbReference>
<dbReference type="PDB" id="4V55">
    <property type="method" value="X-ray"/>
    <property type="resolution" value="4.00 A"/>
    <property type="chains" value="AU/CU=2-71"/>
</dbReference>
<dbReference type="PDB" id="4V56">
    <property type="method" value="X-ray"/>
    <property type="resolution" value="3.93 A"/>
    <property type="chains" value="AU/CU=2-71"/>
</dbReference>
<dbReference type="PDB" id="4V57">
    <property type="method" value="X-ray"/>
    <property type="resolution" value="3.50 A"/>
    <property type="chains" value="AU/CU=2-71"/>
</dbReference>
<dbReference type="PDB" id="4V5B">
    <property type="method" value="X-ray"/>
    <property type="resolution" value="3.74 A"/>
    <property type="chains" value="BU/DU=1-71"/>
</dbReference>
<dbReference type="PDB" id="4V5H">
    <property type="method" value="EM"/>
    <property type="resolution" value="5.80 A"/>
    <property type="chains" value="AU=4-54"/>
</dbReference>
<dbReference type="PDB" id="4V5Y">
    <property type="method" value="X-ray"/>
    <property type="resolution" value="4.45 A"/>
    <property type="chains" value="AU/CU=2-71"/>
</dbReference>
<dbReference type="PDB" id="4V64">
    <property type="method" value="X-ray"/>
    <property type="resolution" value="3.50 A"/>
    <property type="chains" value="AU/CU=1-71"/>
</dbReference>
<dbReference type="PDB" id="4V65">
    <property type="method" value="EM"/>
    <property type="resolution" value="9.00 A"/>
    <property type="chains" value="AQ=1-71"/>
</dbReference>
<dbReference type="PDB" id="4V66">
    <property type="method" value="EM"/>
    <property type="resolution" value="9.00 A"/>
    <property type="chains" value="AQ=1-71"/>
</dbReference>
<dbReference type="PDB" id="4V69">
    <property type="method" value="EM"/>
    <property type="resolution" value="6.70 A"/>
    <property type="chains" value="AU=4-54"/>
</dbReference>
<dbReference type="PDB" id="4V6C">
    <property type="method" value="X-ray"/>
    <property type="resolution" value="3.19 A"/>
    <property type="chains" value="AU/CU=1-71"/>
</dbReference>
<dbReference type="PDB" id="4V6D">
    <property type="method" value="X-ray"/>
    <property type="resolution" value="3.81 A"/>
    <property type="chains" value="AU/CU=1-71"/>
</dbReference>
<dbReference type="PDB" id="4V6E">
    <property type="method" value="X-ray"/>
    <property type="resolution" value="3.71 A"/>
    <property type="chains" value="AU/CU=1-71"/>
</dbReference>
<dbReference type="PDB" id="4V6K">
    <property type="method" value="EM"/>
    <property type="resolution" value="8.25 A"/>
    <property type="chains" value="BY=1-71"/>
</dbReference>
<dbReference type="PDB" id="4V6L">
    <property type="method" value="EM"/>
    <property type="resolution" value="13.20 A"/>
    <property type="chains" value="AY=1-71"/>
</dbReference>
<dbReference type="PDB" id="4V6M">
    <property type="method" value="EM"/>
    <property type="resolution" value="7.10 A"/>
    <property type="chains" value="AU=2-71"/>
</dbReference>
<dbReference type="PDB" id="4V6N">
    <property type="method" value="EM"/>
    <property type="resolution" value="12.10 A"/>
    <property type="chains" value="BX=2-71"/>
</dbReference>
<dbReference type="PDB" id="4V6O">
    <property type="method" value="EM"/>
    <property type="resolution" value="14.70 A"/>
    <property type="chains" value="AX=2-71"/>
</dbReference>
<dbReference type="PDB" id="4V6P">
    <property type="method" value="EM"/>
    <property type="resolution" value="13.50 A"/>
    <property type="chains" value="AX=2-71"/>
</dbReference>
<dbReference type="PDB" id="4V6Q">
    <property type="method" value="EM"/>
    <property type="resolution" value="11.50 A"/>
    <property type="chains" value="AX=2-71"/>
</dbReference>
<dbReference type="PDB" id="4V6R">
    <property type="method" value="EM"/>
    <property type="resolution" value="11.50 A"/>
    <property type="chains" value="AX=2-71"/>
</dbReference>
<dbReference type="PDB" id="4V6S">
    <property type="method" value="EM"/>
    <property type="resolution" value="13.10 A"/>
    <property type="chains" value="BW=2-71"/>
</dbReference>
<dbReference type="PDB" id="4V6T">
    <property type="method" value="EM"/>
    <property type="resolution" value="8.30 A"/>
    <property type="chains" value="AU=4-54"/>
</dbReference>
<dbReference type="PDB" id="4V6V">
    <property type="method" value="EM"/>
    <property type="resolution" value="9.80 A"/>
    <property type="chains" value="AU=2-71"/>
</dbReference>
<dbReference type="PDB" id="4V6Y">
    <property type="method" value="EM"/>
    <property type="resolution" value="12.00 A"/>
    <property type="chains" value="AU=4-54"/>
</dbReference>
<dbReference type="PDB" id="4V6Z">
    <property type="method" value="EM"/>
    <property type="resolution" value="12.00 A"/>
    <property type="chains" value="AU=4-54"/>
</dbReference>
<dbReference type="PDB" id="4V70">
    <property type="method" value="EM"/>
    <property type="resolution" value="17.00 A"/>
    <property type="chains" value="AU=4-54"/>
</dbReference>
<dbReference type="PDB" id="4V71">
    <property type="method" value="EM"/>
    <property type="resolution" value="20.00 A"/>
    <property type="chains" value="AU=4-54"/>
</dbReference>
<dbReference type="PDB" id="4V72">
    <property type="method" value="EM"/>
    <property type="resolution" value="13.00 A"/>
    <property type="chains" value="AU=4-54"/>
</dbReference>
<dbReference type="PDB" id="4V73">
    <property type="method" value="EM"/>
    <property type="resolution" value="15.00 A"/>
    <property type="chains" value="AU=4-54"/>
</dbReference>
<dbReference type="PDB" id="4V74">
    <property type="method" value="EM"/>
    <property type="resolution" value="17.00 A"/>
    <property type="chains" value="AU=4-54"/>
</dbReference>
<dbReference type="PDB" id="4V75">
    <property type="method" value="EM"/>
    <property type="resolution" value="12.00 A"/>
    <property type="chains" value="AU=4-54"/>
</dbReference>
<dbReference type="PDB" id="4V76">
    <property type="method" value="EM"/>
    <property type="resolution" value="17.00 A"/>
    <property type="chains" value="AU=4-54"/>
</dbReference>
<dbReference type="PDB" id="4V77">
    <property type="method" value="EM"/>
    <property type="resolution" value="17.00 A"/>
    <property type="chains" value="AU=4-54"/>
</dbReference>
<dbReference type="PDB" id="4V78">
    <property type="method" value="EM"/>
    <property type="resolution" value="20.00 A"/>
    <property type="chains" value="AU=4-54"/>
</dbReference>
<dbReference type="PDB" id="4V79">
    <property type="method" value="EM"/>
    <property type="resolution" value="15.00 A"/>
    <property type="chains" value="AU=4-54"/>
</dbReference>
<dbReference type="PDB" id="4V7A">
    <property type="method" value="EM"/>
    <property type="resolution" value="9.00 A"/>
    <property type="chains" value="AU=4-54"/>
</dbReference>
<dbReference type="PDB" id="4V7B">
    <property type="method" value="EM"/>
    <property type="resolution" value="6.80 A"/>
    <property type="chains" value="AU=1-71"/>
</dbReference>
<dbReference type="PDB" id="4V7C">
    <property type="method" value="EM"/>
    <property type="resolution" value="7.60 A"/>
    <property type="chains" value="AU=2-71"/>
</dbReference>
<dbReference type="PDB" id="4V7D">
    <property type="method" value="EM"/>
    <property type="resolution" value="7.60 A"/>
    <property type="chains" value="BU=2-71"/>
</dbReference>
<dbReference type="PDB" id="4V7I">
    <property type="method" value="EM"/>
    <property type="resolution" value="9.60 A"/>
    <property type="chains" value="BU=1-71"/>
</dbReference>
<dbReference type="PDB" id="4V7S">
    <property type="method" value="X-ray"/>
    <property type="resolution" value="3.25 A"/>
    <property type="chains" value="AU/CU=4-54"/>
</dbReference>
<dbReference type="PDB" id="4V7T">
    <property type="method" value="X-ray"/>
    <property type="resolution" value="3.19 A"/>
    <property type="chains" value="AU/CU=4-54"/>
</dbReference>
<dbReference type="PDB" id="4V7U">
    <property type="method" value="X-ray"/>
    <property type="resolution" value="3.10 A"/>
    <property type="chains" value="AU/CU=4-54"/>
</dbReference>
<dbReference type="PDB" id="4V7V">
    <property type="method" value="X-ray"/>
    <property type="resolution" value="3.29 A"/>
    <property type="chains" value="AU/CU=4-54"/>
</dbReference>
<dbReference type="PDB" id="4V85">
    <property type="method" value="X-ray"/>
    <property type="resolution" value="3.20 A"/>
    <property type="chains" value="AU=1-71"/>
</dbReference>
<dbReference type="PDB" id="4V89">
    <property type="method" value="X-ray"/>
    <property type="resolution" value="3.70 A"/>
    <property type="chains" value="AU=1-71"/>
</dbReference>
<dbReference type="PDB" id="4V9C">
    <property type="method" value="X-ray"/>
    <property type="resolution" value="3.30 A"/>
    <property type="chains" value="AU/CU=1-71"/>
</dbReference>
<dbReference type="PDB" id="4V9D">
    <property type="method" value="X-ray"/>
    <property type="resolution" value="3.00 A"/>
    <property type="chains" value="AU/BU=4-54"/>
</dbReference>
<dbReference type="PDB" id="4V9O">
    <property type="method" value="X-ray"/>
    <property type="resolution" value="2.90 A"/>
    <property type="chains" value="BU/DU/FU/HU=1-71"/>
</dbReference>
<dbReference type="PDB" id="4V9P">
    <property type="method" value="X-ray"/>
    <property type="resolution" value="2.90 A"/>
    <property type="chains" value="BU/DU/FU/HU=1-71"/>
</dbReference>
<dbReference type="PDB" id="4WF1">
    <property type="method" value="X-ray"/>
    <property type="resolution" value="3.09 A"/>
    <property type="chains" value="AU/CU=4-54"/>
</dbReference>
<dbReference type="PDB" id="4WOI">
    <property type="method" value="X-ray"/>
    <property type="resolution" value="3.00 A"/>
    <property type="chains" value="AU/DU=1-71"/>
</dbReference>
<dbReference type="PDB" id="4WWW">
    <property type="method" value="X-ray"/>
    <property type="resolution" value="3.10 A"/>
    <property type="chains" value="QU/XU=4-54"/>
</dbReference>
<dbReference type="PDB" id="4YBB">
    <property type="method" value="X-ray"/>
    <property type="resolution" value="2.10 A"/>
    <property type="chains" value="AU/BU=2-57"/>
</dbReference>
<dbReference type="PDB" id="5AFI">
    <property type="method" value="EM"/>
    <property type="resolution" value="2.90 A"/>
    <property type="chains" value="u=1-71"/>
</dbReference>
<dbReference type="PDB" id="5H5U">
    <property type="method" value="EM"/>
    <property type="resolution" value="3.00 A"/>
    <property type="chains" value="2=2-71"/>
</dbReference>
<dbReference type="PDB" id="5IQR">
    <property type="method" value="EM"/>
    <property type="resolution" value="3.00 A"/>
    <property type="chains" value="z=1-71"/>
</dbReference>
<dbReference type="PDB" id="5J5B">
    <property type="method" value="X-ray"/>
    <property type="resolution" value="2.80 A"/>
    <property type="chains" value="AU/BU=2-57"/>
</dbReference>
<dbReference type="PDB" id="5J7L">
    <property type="method" value="X-ray"/>
    <property type="resolution" value="3.00 A"/>
    <property type="chains" value="AU/BU=2-57"/>
</dbReference>
<dbReference type="PDB" id="5J88">
    <property type="method" value="X-ray"/>
    <property type="resolution" value="3.32 A"/>
    <property type="chains" value="AU/BU=2-57"/>
</dbReference>
<dbReference type="PDB" id="5J8A">
    <property type="method" value="X-ray"/>
    <property type="resolution" value="3.10 A"/>
    <property type="chains" value="AU/BU=2-57"/>
</dbReference>
<dbReference type="PDB" id="5J91">
    <property type="method" value="X-ray"/>
    <property type="resolution" value="2.96 A"/>
    <property type="chains" value="AU/BU=2-57"/>
</dbReference>
<dbReference type="PDB" id="5JC9">
    <property type="method" value="X-ray"/>
    <property type="resolution" value="3.03 A"/>
    <property type="chains" value="AU/BU=2-57"/>
</dbReference>
<dbReference type="PDB" id="5JTE">
    <property type="method" value="EM"/>
    <property type="resolution" value="3.60 A"/>
    <property type="chains" value="AU=1-71"/>
</dbReference>
<dbReference type="PDB" id="5JU8">
    <property type="method" value="EM"/>
    <property type="resolution" value="3.60 A"/>
    <property type="chains" value="AU=1-71"/>
</dbReference>
<dbReference type="PDB" id="5KCR">
    <property type="method" value="EM"/>
    <property type="resolution" value="3.60 A"/>
    <property type="chains" value="1u=1-71"/>
</dbReference>
<dbReference type="PDB" id="5KCS">
    <property type="method" value="EM"/>
    <property type="resolution" value="3.90 A"/>
    <property type="chains" value="1u=1-71"/>
</dbReference>
<dbReference type="PDB" id="5KPS">
    <property type="method" value="EM"/>
    <property type="resolution" value="3.90 A"/>
    <property type="chains" value="26=1-71"/>
</dbReference>
<dbReference type="PDB" id="5KPV">
    <property type="method" value="EM"/>
    <property type="resolution" value="4.10 A"/>
    <property type="chains" value="25=1-71"/>
</dbReference>
<dbReference type="PDB" id="5KPW">
    <property type="method" value="EM"/>
    <property type="resolution" value="3.90 A"/>
    <property type="chains" value="25=1-71"/>
</dbReference>
<dbReference type="PDB" id="5KPX">
    <property type="method" value="EM"/>
    <property type="resolution" value="3.90 A"/>
    <property type="chains" value="25=1-71"/>
</dbReference>
<dbReference type="PDB" id="5L3P">
    <property type="method" value="EM"/>
    <property type="resolution" value="3.70 A"/>
    <property type="chains" value="u=1-71"/>
</dbReference>
<dbReference type="PDB" id="5LZA">
    <property type="method" value="EM"/>
    <property type="resolution" value="3.60 A"/>
    <property type="chains" value="u=4-68"/>
</dbReference>
<dbReference type="PDB" id="5LZB">
    <property type="method" value="EM"/>
    <property type="resolution" value="5.30 A"/>
    <property type="chains" value="u=4-68"/>
</dbReference>
<dbReference type="PDB" id="5LZC">
    <property type="method" value="EM"/>
    <property type="resolution" value="4.80 A"/>
    <property type="chains" value="u=4-68"/>
</dbReference>
<dbReference type="PDB" id="5LZD">
    <property type="method" value="EM"/>
    <property type="resolution" value="3.40 A"/>
    <property type="chains" value="u=4-68"/>
</dbReference>
<dbReference type="PDB" id="5LZE">
    <property type="method" value="EM"/>
    <property type="resolution" value="3.50 A"/>
    <property type="chains" value="u=4-68"/>
</dbReference>
<dbReference type="PDB" id="5LZF">
    <property type="method" value="EM"/>
    <property type="resolution" value="4.60 A"/>
    <property type="chains" value="u=4-68"/>
</dbReference>
<dbReference type="PDB" id="5MDV">
    <property type="method" value="EM"/>
    <property type="resolution" value="2.97 A"/>
    <property type="chains" value="z=1-71"/>
</dbReference>
<dbReference type="PDB" id="5MDW">
    <property type="method" value="EM"/>
    <property type="resolution" value="3.06 A"/>
    <property type="chains" value="z=1-71"/>
</dbReference>
<dbReference type="PDB" id="5MDY">
    <property type="method" value="EM"/>
    <property type="resolution" value="3.35 A"/>
    <property type="chains" value="z=1-71"/>
</dbReference>
<dbReference type="PDB" id="5MDZ">
    <property type="method" value="EM"/>
    <property type="resolution" value="3.10 A"/>
    <property type="chains" value="z=1-71"/>
</dbReference>
<dbReference type="PDB" id="5ME0">
    <property type="method" value="EM"/>
    <property type="resolution" value="13.50 A"/>
    <property type="chains" value="U=1-71"/>
</dbReference>
<dbReference type="PDB" id="5ME1">
    <property type="method" value="EM"/>
    <property type="resolution" value="13.50 A"/>
    <property type="chains" value="U=1-71"/>
</dbReference>
<dbReference type="PDB" id="5MGP">
    <property type="method" value="EM"/>
    <property type="resolution" value="3.10 A"/>
    <property type="chains" value="u=4-68"/>
</dbReference>
<dbReference type="PDB" id="5MY1">
    <property type="method" value="EM"/>
    <property type="resolution" value="7.60 A"/>
    <property type="chains" value="U=1-71"/>
</dbReference>
<dbReference type="PDB" id="5NP6">
    <property type="method" value="EM"/>
    <property type="resolution" value="3.60 A"/>
    <property type="chains" value="X=4-68"/>
</dbReference>
<dbReference type="PDB" id="5NWY">
    <property type="method" value="EM"/>
    <property type="resolution" value="2.93 A"/>
    <property type="chains" value="K=1-71"/>
</dbReference>
<dbReference type="PDB" id="5O2R">
    <property type="method" value="EM"/>
    <property type="resolution" value="3.40 A"/>
    <property type="chains" value="u=4-68"/>
</dbReference>
<dbReference type="PDB" id="5U4I">
    <property type="method" value="EM"/>
    <property type="resolution" value="3.50 A"/>
    <property type="chains" value="u=1-71"/>
</dbReference>
<dbReference type="PDB" id="5U9F">
    <property type="method" value="EM"/>
    <property type="resolution" value="3.20 A"/>
    <property type="chains" value="U=1-71"/>
</dbReference>
<dbReference type="PDB" id="5U9G">
    <property type="method" value="EM"/>
    <property type="resolution" value="3.20 A"/>
    <property type="chains" value="U=1-71"/>
</dbReference>
<dbReference type="PDB" id="5UYK">
    <property type="method" value="EM"/>
    <property type="resolution" value="3.90 A"/>
    <property type="chains" value="U=4-68"/>
</dbReference>
<dbReference type="PDB" id="5UYL">
    <property type="method" value="EM"/>
    <property type="resolution" value="3.60 A"/>
    <property type="chains" value="U=4-68"/>
</dbReference>
<dbReference type="PDB" id="5UYM">
    <property type="method" value="EM"/>
    <property type="resolution" value="3.20 A"/>
    <property type="chains" value="U=4-68"/>
</dbReference>
<dbReference type="PDB" id="5UYN">
    <property type="method" value="EM"/>
    <property type="resolution" value="4.00 A"/>
    <property type="chains" value="U=4-68"/>
</dbReference>
<dbReference type="PDB" id="5UYP">
    <property type="method" value="EM"/>
    <property type="resolution" value="3.90 A"/>
    <property type="chains" value="U=4-68"/>
</dbReference>
<dbReference type="PDB" id="5UYQ">
    <property type="method" value="EM"/>
    <property type="resolution" value="3.80 A"/>
    <property type="chains" value="U=4-68"/>
</dbReference>
<dbReference type="PDB" id="5WDT">
    <property type="method" value="EM"/>
    <property type="resolution" value="3.00 A"/>
    <property type="chains" value="u=4-68"/>
</dbReference>
<dbReference type="PDB" id="5WE4">
    <property type="method" value="EM"/>
    <property type="resolution" value="3.10 A"/>
    <property type="chains" value="u=4-68"/>
</dbReference>
<dbReference type="PDB" id="5WE6">
    <property type="method" value="EM"/>
    <property type="resolution" value="3.40 A"/>
    <property type="chains" value="u=4-68"/>
</dbReference>
<dbReference type="PDB" id="5WF0">
    <property type="method" value="EM"/>
    <property type="resolution" value="3.60 A"/>
    <property type="chains" value="u=4-68"/>
</dbReference>
<dbReference type="PDB" id="5WFK">
    <property type="method" value="EM"/>
    <property type="resolution" value="3.40 A"/>
    <property type="chains" value="u=4-68"/>
</dbReference>
<dbReference type="PDB" id="5WFS">
    <property type="method" value="EM"/>
    <property type="resolution" value="3.00 A"/>
    <property type="chains" value="u=4-68"/>
</dbReference>
<dbReference type="PDB" id="6AWB">
    <property type="method" value="EM"/>
    <property type="resolution" value="6.70 A"/>
    <property type="chains" value="X=4-68"/>
</dbReference>
<dbReference type="PDB" id="6AWC">
    <property type="method" value="EM"/>
    <property type="resolution" value="7.90 A"/>
    <property type="chains" value="X=4-68"/>
</dbReference>
<dbReference type="PDB" id="6AWD">
    <property type="method" value="EM"/>
    <property type="resolution" value="8.10 A"/>
    <property type="chains" value="X=4-68"/>
</dbReference>
<dbReference type="PDB" id="6BU8">
    <property type="method" value="EM"/>
    <property type="resolution" value="3.50 A"/>
    <property type="chains" value="U=4-68"/>
</dbReference>
<dbReference type="PDB" id="6C4I">
    <property type="method" value="EM"/>
    <property type="resolution" value="3.24 A"/>
    <property type="chains" value="u=1-71"/>
</dbReference>
<dbReference type="PDB" id="6DNC">
    <property type="method" value="EM"/>
    <property type="resolution" value="3.70 A"/>
    <property type="chains" value="HB=1-71"/>
</dbReference>
<dbReference type="PDB" id="6ENF">
    <property type="method" value="EM"/>
    <property type="resolution" value="3.20 A"/>
    <property type="chains" value="u=4-68"/>
</dbReference>
<dbReference type="PDB" id="6ENJ">
    <property type="method" value="EM"/>
    <property type="resolution" value="3.70 A"/>
    <property type="chains" value="u=4-68"/>
</dbReference>
<dbReference type="PDB" id="6ENU">
    <property type="method" value="EM"/>
    <property type="resolution" value="3.10 A"/>
    <property type="chains" value="u=4-68"/>
</dbReference>
<dbReference type="PDB" id="6GWT">
    <property type="method" value="EM"/>
    <property type="resolution" value="3.80 A"/>
    <property type="chains" value="u=4-68"/>
</dbReference>
<dbReference type="PDB" id="6GXM">
    <property type="method" value="EM"/>
    <property type="resolution" value="3.80 A"/>
    <property type="chains" value="u=4-68"/>
</dbReference>
<dbReference type="PDB" id="6GXN">
    <property type="method" value="EM"/>
    <property type="resolution" value="3.90 A"/>
    <property type="chains" value="u=4-68"/>
</dbReference>
<dbReference type="PDB" id="6GXO">
    <property type="method" value="EM"/>
    <property type="resolution" value="3.90 A"/>
    <property type="chains" value="u=4-68"/>
</dbReference>
<dbReference type="PDB" id="6GXP">
    <property type="method" value="EM"/>
    <property type="resolution" value="4.40 A"/>
    <property type="chains" value="u=4-68"/>
</dbReference>
<dbReference type="PDB" id="6H4N">
    <property type="method" value="EM"/>
    <property type="resolution" value="3.00 A"/>
    <property type="chains" value="u=4-68"/>
</dbReference>
<dbReference type="PDB" id="6H58">
    <property type="method" value="EM"/>
    <property type="resolution" value="7.90 A"/>
    <property type="chains" value="u/uu=4-68"/>
</dbReference>
<dbReference type="PDB" id="6HRM">
    <property type="method" value="EM"/>
    <property type="resolution" value="2.96 A"/>
    <property type="chains" value="z=2-71"/>
</dbReference>
<dbReference type="PDB" id="6I7V">
    <property type="method" value="X-ray"/>
    <property type="resolution" value="2.90 A"/>
    <property type="chains" value="AU/BU=4-57"/>
</dbReference>
<dbReference type="PDB" id="6O7K">
    <property type="method" value="EM"/>
    <property type="resolution" value="4.20 A"/>
    <property type="chains" value="2=4-54"/>
</dbReference>
<dbReference type="PDB" id="6O9J">
    <property type="method" value="EM"/>
    <property type="resolution" value="3.90 A"/>
    <property type="chains" value="u=4-54"/>
</dbReference>
<dbReference type="PDB" id="6O9K">
    <property type="method" value="EM"/>
    <property type="resolution" value="4.00 A"/>
    <property type="chains" value="u=4-54"/>
</dbReference>
<dbReference type="PDB" id="6OFX">
    <property type="method" value="EM"/>
    <property type="resolution" value="3.30 A"/>
    <property type="chains" value="Z=4-68"/>
</dbReference>
<dbReference type="PDB" id="6OG7">
    <property type="method" value="EM"/>
    <property type="resolution" value="3.30 A"/>
    <property type="chains" value="Z=4-68"/>
</dbReference>
<dbReference type="PDB" id="6OGF">
    <property type="method" value="EM"/>
    <property type="resolution" value="3.90 A"/>
    <property type="chains" value="Z=1-71"/>
</dbReference>
<dbReference type="PDB" id="6OGG">
    <property type="method" value="EM"/>
    <property type="resolution" value="4.20 A"/>
    <property type="chains" value="Z=1-71"/>
</dbReference>
<dbReference type="PDB" id="6OGI">
    <property type="method" value="EM"/>
    <property type="resolution" value="3.40 A"/>
    <property type="chains" value="Z=1-71"/>
</dbReference>
<dbReference type="PDB" id="6OM6">
    <property type="method" value="EM"/>
    <property type="resolution" value="3.10 A"/>
    <property type="chains" value="z=1-71"/>
</dbReference>
<dbReference type="PDB" id="6ORE">
    <property type="method" value="EM"/>
    <property type="resolution" value="2.90 A"/>
    <property type="chains" value="z=2-71"/>
</dbReference>
<dbReference type="PDB" id="6ORL">
    <property type="method" value="EM"/>
    <property type="resolution" value="3.50 A"/>
    <property type="chains" value="z=2-71"/>
</dbReference>
<dbReference type="PDB" id="6OSK">
    <property type="method" value="EM"/>
    <property type="resolution" value="3.60 A"/>
    <property type="chains" value="z=2-71"/>
</dbReference>
<dbReference type="PDB" id="6OSQ">
    <property type="method" value="EM"/>
    <property type="resolution" value="3.50 A"/>
    <property type="chains" value="z=2-71"/>
</dbReference>
<dbReference type="PDB" id="6OST">
    <property type="method" value="EM"/>
    <property type="resolution" value="4.20 A"/>
    <property type="chains" value="z=2-71"/>
</dbReference>
<dbReference type="PDB" id="6OT3">
    <property type="method" value="EM"/>
    <property type="resolution" value="3.90 A"/>
    <property type="chains" value="z=2-71"/>
</dbReference>
<dbReference type="PDB" id="6OUO">
    <property type="method" value="EM"/>
    <property type="resolution" value="3.70 A"/>
    <property type="chains" value="z=2-71"/>
</dbReference>
<dbReference type="PDB" id="6Q97">
    <property type="method" value="EM"/>
    <property type="resolution" value="3.90 A"/>
    <property type="chains" value="z=2-71"/>
</dbReference>
<dbReference type="PDB" id="6Q98">
    <property type="method" value="EM"/>
    <property type="resolution" value="4.30 A"/>
    <property type="chains" value="z=1-71"/>
</dbReference>
<dbReference type="PDB" id="6Q9A">
    <property type="method" value="EM"/>
    <property type="resolution" value="3.70 A"/>
    <property type="chains" value="z=2-71"/>
</dbReference>
<dbReference type="PDB" id="6SZS">
    <property type="method" value="EM"/>
    <property type="resolution" value="3.06 A"/>
    <property type="chains" value="u=1-71"/>
</dbReference>
<dbReference type="PDB" id="6TBV">
    <property type="method" value="EM"/>
    <property type="resolution" value="2.70 A"/>
    <property type="chains" value="S211=1-71"/>
</dbReference>
<dbReference type="PDB" id="6TC3">
    <property type="method" value="EM"/>
    <property type="resolution" value="2.70 A"/>
    <property type="chains" value="S211=1-71"/>
</dbReference>
<dbReference type="PDB" id="6VU3">
    <property type="method" value="EM"/>
    <property type="resolution" value="3.70 A"/>
    <property type="chains" value="F=2-71"/>
</dbReference>
<dbReference type="PDB" id="6VWL">
    <property type="method" value="EM"/>
    <property type="resolution" value="3.10 A"/>
    <property type="chains" value="t=1-71"/>
</dbReference>
<dbReference type="PDB" id="6VWM">
    <property type="method" value="EM"/>
    <property type="resolution" value="3.40 A"/>
    <property type="chains" value="t=1-71"/>
</dbReference>
<dbReference type="PDB" id="6VWN">
    <property type="method" value="EM"/>
    <property type="resolution" value="3.40 A"/>
    <property type="chains" value="t=1-71"/>
</dbReference>
<dbReference type="PDB" id="6VYQ">
    <property type="method" value="EM"/>
    <property type="resolution" value="3.70 A"/>
    <property type="chains" value="F=1-71"/>
</dbReference>
<dbReference type="PDB" id="6VYR">
    <property type="method" value="EM"/>
    <property type="resolution" value="3.80 A"/>
    <property type="chains" value="F=1-71"/>
</dbReference>
<dbReference type="PDB" id="6VYS">
    <property type="method" value="EM"/>
    <property type="resolution" value="3.70 A"/>
    <property type="chains" value="F=1-71"/>
</dbReference>
<dbReference type="PDB" id="6VYT">
    <property type="method" value="EM"/>
    <property type="resolution" value="14.00 A"/>
    <property type="chains" value="F=1-71"/>
</dbReference>
<dbReference type="PDB" id="6VYU">
    <property type="method" value="EM"/>
    <property type="resolution" value="7.00 A"/>
    <property type="chains" value="F=1-71"/>
</dbReference>
<dbReference type="PDB" id="6VYW">
    <property type="method" value="EM"/>
    <property type="resolution" value="7.00 A"/>
    <property type="chains" value="F=1-71"/>
</dbReference>
<dbReference type="PDB" id="6VYX">
    <property type="method" value="EM"/>
    <property type="resolution" value="9.90 A"/>
    <property type="chains" value="F=1-71"/>
</dbReference>
<dbReference type="PDB" id="6VYY">
    <property type="method" value="EM"/>
    <property type="resolution" value="9.90 A"/>
    <property type="chains" value="F=1-71"/>
</dbReference>
<dbReference type="PDB" id="6VYZ">
    <property type="method" value="EM"/>
    <property type="resolution" value="9.90 A"/>
    <property type="chains" value="F=1-71"/>
</dbReference>
<dbReference type="PDB" id="6VZ2">
    <property type="method" value="EM"/>
    <property type="resolution" value="10.00 A"/>
    <property type="chains" value="F=1-71"/>
</dbReference>
<dbReference type="PDB" id="6VZ3">
    <property type="method" value="EM"/>
    <property type="resolution" value="8.90 A"/>
    <property type="chains" value="F=2-71"/>
</dbReference>
<dbReference type="PDB" id="6VZ5">
    <property type="method" value="EM"/>
    <property type="resolution" value="8.90 A"/>
    <property type="chains" value="F=1-71"/>
</dbReference>
<dbReference type="PDB" id="6VZ7">
    <property type="method" value="EM"/>
    <property type="resolution" value="7.00 A"/>
    <property type="chains" value="F=2-71"/>
</dbReference>
<dbReference type="PDB" id="6VZJ">
    <property type="method" value="EM"/>
    <property type="resolution" value="4.10 A"/>
    <property type="chains" value="F=1-71"/>
</dbReference>
<dbReference type="PDB" id="6WD0">
    <property type="method" value="EM"/>
    <property type="resolution" value="3.00 A"/>
    <property type="chains" value="Z=4-68"/>
</dbReference>
<dbReference type="PDB" id="6WD1">
    <property type="method" value="EM"/>
    <property type="resolution" value="3.30 A"/>
    <property type="chains" value="Z=4-68"/>
</dbReference>
<dbReference type="PDB" id="6WD2">
    <property type="method" value="EM"/>
    <property type="resolution" value="3.60 A"/>
    <property type="chains" value="Z=4-68"/>
</dbReference>
<dbReference type="PDB" id="6WD3">
    <property type="method" value="EM"/>
    <property type="resolution" value="3.60 A"/>
    <property type="chains" value="Z=4-68"/>
</dbReference>
<dbReference type="PDB" id="6WD4">
    <property type="method" value="EM"/>
    <property type="resolution" value="3.70 A"/>
    <property type="chains" value="Z=4-68"/>
</dbReference>
<dbReference type="PDB" id="6WD5">
    <property type="method" value="EM"/>
    <property type="resolution" value="3.60 A"/>
    <property type="chains" value="Z=4-68"/>
</dbReference>
<dbReference type="PDB" id="6WD6">
    <property type="method" value="EM"/>
    <property type="resolution" value="3.70 A"/>
    <property type="chains" value="Z=4-68"/>
</dbReference>
<dbReference type="PDB" id="6WD7">
    <property type="method" value="EM"/>
    <property type="resolution" value="3.90 A"/>
    <property type="chains" value="Z=4-68"/>
</dbReference>
<dbReference type="PDB" id="6WD8">
    <property type="method" value="EM"/>
    <property type="resolution" value="3.70 A"/>
    <property type="chains" value="Z=4-68"/>
</dbReference>
<dbReference type="PDB" id="6WD9">
    <property type="method" value="EM"/>
    <property type="resolution" value="3.70 A"/>
    <property type="chains" value="Z=4-68"/>
</dbReference>
<dbReference type="PDB" id="6WDA">
    <property type="method" value="EM"/>
    <property type="resolution" value="3.80 A"/>
    <property type="chains" value="Z=4-68"/>
</dbReference>
<dbReference type="PDB" id="6WDB">
    <property type="method" value="EM"/>
    <property type="resolution" value="4.00 A"/>
    <property type="chains" value="Z=4-68"/>
</dbReference>
<dbReference type="PDB" id="6WDC">
    <property type="method" value="EM"/>
    <property type="resolution" value="4.20 A"/>
    <property type="chains" value="Z=4-68"/>
</dbReference>
<dbReference type="PDB" id="6WDD">
    <property type="method" value="EM"/>
    <property type="resolution" value="3.20 A"/>
    <property type="chains" value="Z=4-68"/>
</dbReference>
<dbReference type="PDB" id="6WDE">
    <property type="method" value="EM"/>
    <property type="resolution" value="3.00 A"/>
    <property type="chains" value="Z=4-68"/>
</dbReference>
<dbReference type="PDB" id="6WDF">
    <property type="method" value="EM"/>
    <property type="resolution" value="3.30 A"/>
    <property type="chains" value="Z=4-68"/>
</dbReference>
<dbReference type="PDB" id="6WDG">
    <property type="method" value="EM"/>
    <property type="resolution" value="3.30 A"/>
    <property type="chains" value="Z=4-68"/>
</dbReference>
<dbReference type="PDB" id="6WDH">
    <property type="method" value="EM"/>
    <property type="resolution" value="4.30 A"/>
    <property type="chains" value="Z=4-68"/>
</dbReference>
<dbReference type="PDB" id="6WDI">
    <property type="method" value="EM"/>
    <property type="resolution" value="4.00 A"/>
    <property type="chains" value="Z=4-68"/>
</dbReference>
<dbReference type="PDB" id="6WDJ">
    <property type="method" value="EM"/>
    <property type="resolution" value="3.70 A"/>
    <property type="chains" value="Z=4-68"/>
</dbReference>
<dbReference type="PDB" id="6WDK">
    <property type="method" value="EM"/>
    <property type="resolution" value="3.60 A"/>
    <property type="chains" value="Z=4-68"/>
</dbReference>
<dbReference type="PDB" id="6WDL">
    <property type="method" value="EM"/>
    <property type="resolution" value="3.70 A"/>
    <property type="chains" value="Z=4-68"/>
</dbReference>
<dbReference type="PDB" id="6WDM">
    <property type="method" value="EM"/>
    <property type="resolution" value="3.60 A"/>
    <property type="chains" value="Z=4-68"/>
</dbReference>
<dbReference type="PDB" id="6WNV">
    <property type="method" value="EM"/>
    <property type="resolution" value="3.50 A"/>
    <property type="chains" value="Z=4-68"/>
</dbReference>
<dbReference type="PDB" id="6WNW">
    <property type="method" value="EM"/>
    <property type="resolution" value="3.20 A"/>
    <property type="chains" value="Z=4-68"/>
</dbReference>
<dbReference type="PDB" id="6X6T">
    <property type="method" value="EM"/>
    <property type="resolution" value="3.20 A"/>
    <property type="chains" value="F=1-71"/>
</dbReference>
<dbReference type="PDB" id="6X7F">
    <property type="method" value="EM"/>
    <property type="resolution" value="3.50 A"/>
    <property type="chains" value="F=1-71"/>
</dbReference>
<dbReference type="PDB" id="6X7K">
    <property type="method" value="EM"/>
    <property type="resolution" value="3.10 A"/>
    <property type="chains" value="F=1-71"/>
</dbReference>
<dbReference type="PDB" id="6X9Q">
    <property type="method" value="EM"/>
    <property type="resolution" value="4.80 A"/>
    <property type="chains" value="F=1-71"/>
</dbReference>
<dbReference type="PDB" id="6XDQ">
    <property type="method" value="EM"/>
    <property type="resolution" value="3.70 A"/>
    <property type="chains" value="F=1-71"/>
</dbReference>
<dbReference type="PDB" id="6XDR">
    <property type="method" value="EM"/>
    <property type="resolution" value="4.70 A"/>
    <property type="chains" value="F=1-71"/>
</dbReference>
<dbReference type="PDB" id="6XE0">
    <property type="method" value="EM"/>
    <property type="resolution" value="6.80 A"/>
    <property type="chains" value="U=4-54"/>
</dbReference>
<dbReference type="PDB" id="6XGF">
    <property type="method" value="EM"/>
    <property type="resolution" value="5.00 A"/>
    <property type="chains" value="F=1-71"/>
</dbReference>
<dbReference type="PDB" id="6XII">
    <property type="method" value="EM"/>
    <property type="resolution" value="7.00 A"/>
    <property type="chains" value="F=1-71"/>
</dbReference>
<dbReference type="PDB" id="6XIJ">
    <property type="method" value="EM"/>
    <property type="resolution" value="8.00 A"/>
    <property type="chains" value="F=1-71"/>
</dbReference>
<dbReference type="PDB" id="6XZA">
    <property type="method" value="EM"/>
    <property type="resolution" value="2.66 A"/>
    <property type="chains" value="U1=2-57"/>
</dbReference>
<dbReference type="PDB" id="6XZB">
    <property type="method" value="EM"/>
    <property type="resolution" value="2.54 A"/>
    <property type="chains" value="U1=2-57"/>
</dbReference>
<dbReference type="PDB" id="6Y69">
    <property type="method" value="EM"/>
    <property type="resolution" value="2.86 A"/>
    <property type="chains" value="u=4-68"/>
</dbReference>
<dbReference type="PDB" id="6ZTJ">
    <property type="method" value="EM"/>
    <property type="resolution" value="3.40 A"/>
    <property type="chains" value="AU=1-71"/>
</dbReference>
<dbReference type="PDB" id="6ZTL">
    <property type="method" value="EM"/>
    <property type="resolution" value="3.50 A"/>
    <property type="chains" value="AU=1-71"/>
</dbReference>
<dbReference type="PDB" id="6ZTM">
    <property type="method" value="EM"/>
    <property type="resolution" value="3.30 A"/>
    <property type="chains" value="AU=1-71"/>
</dbReference>
<dbReference type="PDB" id="6ZTN">
    <property type="method" value="EM"/>
    <property type="resolution" value="3.90 A"/>
    <property type="chains" value="AU=1-71"/>
</dbReference>
<dbReference type="PDB" id="6ZTO">
    <property type="method" value="EM"/>
    <property type="resolution" value="3.00 A"/>
    <property type="chains" value="AU=1-71"/>
</dbReference>
<dbReference type="PDB" id="6ZTP">
    <property type="method" value="EM"/>
    <property type="resolution" value="3.00 A"/>
    <property type="chains" value="AU=1-71"/>
</dbReference>
<dbReference type="PDB" id="6ZU1">
    <property type="method" value="EM"/>
    <property type="resolution" value="3.00 A"/>
    <property type="chains" value="AU=1-71"/>
</dbReference>
<dbReference type="PDB" id="7ABZ">
    <property type="method" value="EM"/>
    <property type="resolution" value="3.21 A"/>
    <property type="chains" value="z=2-57"/>
</dbReference>
<dbReference type="PDB" id="7AC7">
    <property type="method" value="EM"/>
    <property type="resolution" value="3.08 A"/>
    <property type="chains" value="z=2-71"/>
</dbReference>
<dbReference type="PDB" id="7ACJ">
    <property type="method" value="EM"/>
    <property type="resolution" value="3.20 A"/>
    <property type="chains" value="z=2-71"/>
</dbReference>
<dbReference type="PDB" id="7ACR">
    <property type="method" value="EM"/>
    <property type="resolution" value="3.44 A"/>
    <property type="chains" value="z=2-71"/>
</dbReference>
<dbReference type="PDB" id="7AFO">
    <property type="method" value="EM"/>
    <property type="resolution" value="3.93 A"/>
    <property type="chains" value="U=1-71"/>
</dbReference>
<dbReference type="PDB" id="7B5K">
    <property type="method" value="EM"/>
    <property type="resolution" value="2.90 A"/>
    <property type="chains" value="u=2-57"/>
</dbReference>
<dbReference type="PDB" id="7BOD">
    <property type="method" value="EM"/>
    <property type="resolution" value="2.88 A"/>
    <property type="chains" value="U=1-71"/>
</dbReference>
<dbReference type="PDB" id="7BOE">
    <property type="method" value="EM"/>
    <property type="resolution" value="2.90 A"/>
    <property type="chains" value="U=1-71"/>
</dbReference>
<dbReference type="PDB" id="7BOI">
    <property type="method" value="EM"/>
    <property type="resolution" value="2.98 A"/>
    <property type="chains" value="U=1-71"/>
</dbReference>
<dbReference type="PDB" id="7D6Z">
    <property type="method" value="EM"/>
    <property type="resolution" value="3.40 A"/>
    <property type="chains" value="1=1-71"/>
</dbReference>
<dbReference type="PDB" id="7D80">
    <property type="method" value="EM"/>
    <property type="resolution" value="4.10 A"/>
    <property type="chains" value="V=1-71"/>
</dbReference>
<dbReference type="PDB" id="7JSS">
    <property type="method" value="EM"/>
    <property type="resolution" value="3.70 A"/>
    <property type="chains" value="Z=4-68"/>
</dbReference>
<dbReference type="PDB" id="7JSW">
    <property type="method" value="EM"/>
    <property type="resolution" value="3.80 A"/>
    <property type="chains" value="Z=4-68"/>
</dbReference>
<dbReference type="PDB" id="7JSZ">
    <property type="method" value="EM"/>
    <property type="resolution" value="3.70 A"/>
    <property type="chains" value="Z=4-68"/>
</dbReference>
<dbReference type="PDB" id="7JT1">
    <property type="method" value="EM"/>
    <property type="resolution" value="3.30 A"/>
    <property type="chains" value="Z=4-68"/>
</dbReference>
<dbReference type="PDB" id="7JT2">
    <property type="method" value="EM"/>
    <property type="resolution" value="3.50 A"/>
    <property type="chains" value="Z=4-68"/>
</dbReference>
<dbReference type="PDB" id="7JT3">
    <property type="method" value="EM"/>
    <property type="resolution" value="3.70 A"/>
    <property type="chains" value="Z=4-68"/>
</dbReference>
<dbReference type="PDB" id="7K00">
    <property type="method" value="EM"/>
    <property type="resolution" value="1.98 A"/>
    <property type="chains" value="U=1-71"/>
</dbReference>
<dbReference type="PDB" id="7K50">
    <property type="method" value="EM"/>
    <property type="resolution" value="3.40 A"/>
    <property type="chains" value="Z=4-68"/>
</dbReference>
<dbReference type="PDB" id="7K51">
    <property type="method" value="EM"/>
    <property type="resolution" value="3.50 A"/>
    <property type="chains" value="Z=4-68"/>
</dbReference>
<dbReference type="PDB" id="7K52">
    <property type="method" value="EM"/>
    <property type="resolution" value="3.40 A"/>
    <property type="chains" value="Z=4-68"/>
</dbReference>
<dbReference type="PDB" id="7K53">
    <property type="method" value="EM"/>
    <property type="resolution" value="3.20 A"/>
    <property type="chains" value="Z=4-68"/>
</dbReference>
<dbReference type="PDB" id="7K54">
    <property type="method" value="EM"/>
    <property type="resolution" value="3.20 A"/>
    <property type="chains" value="Z=4-68"/>
</dbReference>
<dbReference type="PDB" id="7K55">
    <property type="method" value="EM"/>
    <property type="resolution" value="3.30 A"/>
    <property type="chains" value="Z=4-68"/>
</dbReference>
<dbReference type="PDB" id="7LV0">
    <property type="method" value="EM"/>
    <property type="resolution" value="3.20 A"/>
    <property type="chains" value="Z=4-68"/>
</dbReference>
<dbReference type="PDB" id="7M5D">
    <property type="method" value="EM"/>
    <property type="resolution" value="2.80 A"/>
    <property type="chains" value="z=2-71"/>
</dbReference>
<dbReference type="PDB" id="7N1P">
    <property type="method" value="EM"/>
    <property type="resolution" value="2.33 A"/>
    <property type="chains" value="SU=1-71"/>
</dbReference>
<dbReference type="PDB" id="7N2C">
    <property type="method" value="EM"/>
    <property type="resolution" value="2.72 A"/>
    <property type="chains" value="SU=1-71"/>
</dbReference>
<dbReference type="PDB" id="7N2U">
    <property type="method" value="EM"/>
    <property type="resolution" value="2.53 A"/>
    <property type="chains" value="SU=1-71"/>
</dbReference>
<dbReference type="PDB" id="7N2V">
    <property type="method" value="EM"/>
    <property type="resolution" value="2.54 A"/>
    <property type="chains" value="SU=1-71"/>
</dbReference>
<dbReference type="PDB" id="7N30">
    <property type="method" value="EM"/>
    <property type="resolution" value="2.66 A"/>
    <property type="chains" value="SU=1-71"/>
</dbReference>
<dbReference type="PDB" id="7N31">
    <property type="method" value="EM"/>
    <property type="resolution" value="2.69 A"/>
    <property type="chains" value="SU=1-71"/>
</dbReference>
<dbReference type="PDB" id="7NAR">
    <property type="method" value="EM"/>
    <property type="resolution" value="3.00 A"/>
    <property type="chains" value="U=1-71"/>
</dbReference>
<dbReference type="PDB" id="7NAS">
    <property type="method" value="EM"/>
    <property type="resolution" value="3.31 A"/>
    <property type="chains" value="U=1-71"/>
</dbReference>
<dbReference type="PDB" id="7NAT">
    <property type="method" value="EM"/>
    <property type="resolution" value="3.59 A"/>
    <property type="chains" value="U=1-71"/>
</dbReference>
<dbReference type="PDB" id="7NBU">
    <property type="method" value="EM"/>
    <property type="resolution" value="3.11 A"/>
    <property type="chains" value="U=2-71"/>
</dbReference>
<dbReference type="PDB" id="7O19">
    <property type="method" value="EM"/>
    <property type="resolution" value="2.90 A"/>
    <property type="chains" value="AU=1-71"/>
</dbReference>
<dbReference type="PDB" id="7O1A">
    <property type="method" value="EM"/>
    <property type="resolution" value="2.40 A"/>
    <property type="chains" value="AU=1-71"/>
</dbReference>
<dbReference type="PDB" id="7O1C">
    <property type="method" value="EM"/>
    <property type="resolution" value="2.60 A"/>
    <property type="chains" value="AU=1-71"/>
</dbReference>
<dbReference type="PDB" id="7O5H">
    <property type="method" value="EM"/>
    <property type="resolution" value="3.10 A"/>
    <property type="chains" value="U=2-57"/>
</dbReference>
<dbReference type="PDB" id="7OE1">
    <property type="method" value="EM"/>
    <property type="resolution" value="3.05 A"/>
    <property type="chains" value="U=1-71"/>
</dbReference>
<dbReference type="PDB" id="7OIZ">
    <property type="method" value="EM"/>
    <property type="resolution" value="2.90 A"/>
    <property type="chains" value="U=1-71"/>
</dbReference>
<dbReference type="PDB" id="7OJ0">
    <property type="method" value="EM"/>
    <property type="resolution" value="3.50 A"/>
    <property type="chains" value="U=1-71"/>
</dbReference>
<dbReference type="PDB" id="7P3K">
    <property type="method" value="EM"/>
    <property type="resolution" value="2.90 A"/>
    <property type="chains" value="U=1-71"/>
</dbReference>
<dbReference type="PDB" id="7PJU">
    <property type="method" value="EM"/>
    <property type="resolution" value="9.50 A"/>
    <property type="chains" value="u=1-71"/>
</dbReference>
<dbReference type="PDB" id="7PJV">
    <property type="method" value="EM"/>
    <property type="resolution" value="3.10 A"/>
    <property type="chains" value="u=1-71"/>
</dbReference>
<dbReference type="PDB" id="7PJY">
    <property type="method" value="EM"/>
    <property type="resolution" value="3.10 A"/>
    <property type="chains" value="u=1-71"/>
</dbReference>
<dbReference type="PDB" id="7QGR">
    <property type="method" value="EM"/>
    <property type="resolution" value="5.70 A"/>
    <property type="chains" value="s=1-71"/>
</dbReference>
<dbReference type="PDB" id="7S1G">
    <property type="method" value="EM"/>
    <property type="resolution" value="2.48 A"/>
    <property type="chains" value="3=1-71"/>
</dbReference>
<dbReference type="PDB" id="7S1H">
    <property type="method" value="EM"/>
    <property type="resolution" value="2.35 A"/>
    <property type="chains" value="3=1-71"/>
</dbReference>
<dbReference type="PDB" id="7S1I">
    <property type="method" value="EM"/>
    <property type="resolution" value="2.48 A"/>
    <property type="chains" value="3=1-71"/>
</dbReference>
<dbReference type="PDB" id="7S1J">
    <property type="method" value="EM"/>
    <property type="resolution" value="2.47 A"/>
    <property type="chains" value="3=1-71"/>
</dbReference>
<dbReference type="PDB" id="7S1K">
    <property type="method" value="EM"/>
    <property type="resolution" value="2.42 A"/>
    <property type="chains" value="3=1-71"/>
</dbReference>
<dbReference type="PDB" id="7SA4">
    <property type="method" value="EM"/>
    <property type="resolution" value="2.55 A"/>
    <property type="chains" value="z=1-71"/>
</dbReference>
<dbReference type="PDB" id="7SS9">
    <property type="method" value="EM"/>
    <property type="resolution" value="3.90 A"/>
    <property type="chains" value="Z=4-68"/>
</dbReference>
<dbReference type="PDB" id="7SSD">
    <property type="method" value="EM"/>
    <property type="resolution" value="3.30 A"/>
    <property type="chains" value="Z=4-68"/>
</dbReference>
<dbReference type="PDB" id="7SSL">
    <property type="method" value="EM"/>
    <property type="resolution" value="3.80 A"/>
    <property type="chains" value="Z=4-68"/>
</dbReference>
<dbReference type="PDB" id="7SSN">
    <property type="method" value="EM"/>
    <property type="resolution" value="3.20 A"/>
    <property type="chains" value="Z=4-68"/>
</dbReference>
<dbReference type="PDB" id="7SSO">
    <property type="method" value="EM"/>
    <property type="resolution" value="3.20 A"/>
    <property type="chains" value="Z=4-68"/>
</dbReference>
<dbReference type="PDB" id="7SSW">
    <property type="method" value="EM"/>
    <property type="resolution" value="3.80 A"/>
    <property type="chains" value="Z=4-68"/>
</dbReference>
<dbReference type="PDB" id="7ST2">
    <property type="method" value="EM"/>
    <property type="resolution" value="2.90 A"/>
    <property type="chains" value="Z=4-68"/>
</dbReference>
<dbReference type="PDB" id="7ST6">
    <property type="method" value="EM"/>
    <property type="resolution" value="3.00 A"/>
    <property type="chains" value="Z=4-68"/>
</dbReference>
<dbReference type="PDB" id="7ST7">
    <property type="method" value="EM"/>
    <property type="resolution" value="3.20 A"/>
    <property type="chains" value="Z=4-68"/>
</dbReference>
<dbReference type="PDB" id="7TOS">
    <property type="method" value="EM"/>
    <property type="resolution" value="2.90 A"/>
    <property type="chains" value="S21=4-68"/>
</dbReference>
<dbReference type="PDB" id="7UG7">
    <property type="method" value="EM"/>
    <property type="resolution" value="2.58 A"/>
    <property type="chains" value="SU=1-71"/>
</dbReference>
<dbReference type="PDB" id="7UPH">
    <property type="method" value="EM"/>
    <property type="resolution" value="4.18 A"/>
    <property type="chains" value="H=2-57"/>
</dbReference>
<dbReference type="PDB" id="7Y7C">
    <property type="method" value="EM"/>
    <property type="resolution" value="2.51 A"/>
    <property type="chains" value="U=1-71"/>
</dbReference>
<dbReference type="PDB" id="7Y7D">
    <property type="method" value="EM"/>
    <property type="resolution" value="2.58 A"/>
    <property type="chains" value="U=1-71"/>
</dbReference>
<dbReference type="PDB" id="7Y7E">
    <property type="method" value="EM"/>
    <property type="resolution" value="2.41 A"/>
    <property type="chains" value="U=1-71"/>
</dbReference>
<dbReference type="PDB" id="7Y7F">
    <property type="method" value="EM"/>
    <property type="resolution" value="2.43 A"/>
    <property type="chains" value="U=1-71"/>
</dbReference>
<dbReference type="PDB" id="7Y7G">
    <property type="method" value="EM"/>
    <property type="resolution" value="2.34 A"/>
    <property type="chains" value="U=1-71"/>
</dbReference>
<dbReference type="PDB" id="7Y7H">
    <property type="method" value="EM"/>
    <property type="resolution" value="2.51 A"/>
    <property type="chains" value="U=1-71"/>
</dbReference>
<dbReference type="PDB" id="7ZTA">
    <property type="method" value="EM"/>
    <property type="resolution" value="2.70 A"/>
    <property type="chains" value="S211=2-57"/>
</dbReference>
<dbReference type="PDB" id="8A3L">
    <property type="method" value="EM"/>
    <property type="resolution" value="3.42 A"/>
    <property type="chains" value="U=1-71"/>
</dbReference>
<dbReference type="PDB" id="8AKN">
    <property type="method" value="EM"/>
    <property type="resolution" value="2.30 A"/>
    <property type="chains" value="V=1-71"/>
</dbReference>
<dbReference type="PDB" id="8AM9">
    <property type="method" value="EM"/>
    <property type="resolution" value="2.80 A"/>
    <property type="chains" value="V=1-71"/>
</dbReference>
<dbReference type="PDB" id="8AYE">
    <property type="method" value="EM"/>
    <property type="resolution" value="1.96 A"/>
    <property type="chains" value="U=1-71"/>
</dbReference>
<dbReference type="PDB" id="8B0X">
    <property type="method" value="EM"/>
    <property type="resolution" value="1.55 A"/>
    <property type="chains" value="U=1-71"/>
</dbReference>
<dbReference type="PDB" id="8B7Y">
    <property type="method" value="EM"/>
    <property type="resolution" value="3.00 A"/>
    <property type="chains" value="5=1-71"/>
</dbReference>
<dbReference type="PDB" id="8BF7">
    <property type="method" value="EM"/>
    <property type="resolution" value="2.33 A"/>
    <property type="chains" value="y=1-71"/>
</dbReference>
<dbReference type="PDB" id="8BGE">
    <property type="method" value="EM"/>
    <property type="resolution" value="2.11 A"/>
    <property type="chains" value="y=1-71"/>
</dbReference>
<dbReference type="PDB" id="8BGH">
    <property type="method" value="EM"/>
    <property type="resolution" value="2.88 A"/>
    <property type="chains" value="y=1-71"/>
</dbReference>
<dbReference type="PDB" id="8BH4">
    <property type="method" value="EM"/>
    <property type="resolution" value="2.62 A"/>
    <property type="chains" value="y=1-71"/>
</dbReference>
<dbReference type="PDB" id="8BHJ">
    <property type="method" value="EM"/>
    <property type="resolution" value="2.81 A"/>
    <property type="chains" value="y=1-71"/>
</dbReference>
<dbReference type="PDB" id="8BHL">
    <property type="method" value="EM"/>
    <property type="resolution" value="2.21 A"/>
    <property type="chains" value="y=1-71"/>
</dbReference>
<dbReference type="PDB" id="8BHN">
    <property type="method" value="EM"/>
    <property type="resolution" value="2.85 A"/>
    <property type="chains" value="y=1-71"/>
</dbReference>
<dbReference type="PDB" id="8BHP">
    <property type="method" value="EM"/>
    <property type="resolution" value="2.37 A"/>
    <property type="chains" value="y=1-71"/>
</dbReference>
<dbReference type="PDB" id="8BIL">
    <property type="method" value="EM"/>
    <property type="resolution" value="2.04 A"/>
    <property type="chains" value="y=1-71"/>
</dbReference>
<dbReference type="PDB" id="8BIM">
    <property type="method" value="EM"/>
    <property type="resolution" value="2.04 A"/>
    <property type="chains" value="y=1-71"/>
</dbReference>
<dbReference type="PDB" id="8CAI">
    <property type="method" value="EM"/>
    <property type="resolution" value="2.08 A"/>
    <property type="chains" value="U=1-71"/>
</dbReference>
<dbReference type="PDB" id="8CEP">
    <property type="method" value="EM"/>
    <property type="resolution" value="2.04 A"/>
    <property type="chains" value="U=1-71"/>
</dbReference>
<dbReference type="PDB" id="8CGJ">
    <property type="method" value="EM"/>
    <property type="resolution" value="1.79 A"/>
    <property type="chains" value="U=1-71"/>
</dbReference>
<dbReference type="PDB" id="8CGR">
    <property type="method" value="EM"/>
    <property type="resolution" value="2.12 A"/>
    <property type="chains" value="U=1-71"/>
</dbReference>
<dbReference type="PDB" id="8CGU">
    <property type="method" value="EM"/>
    <property type="resolution" value="1.89 A"/>
    <property type="chains" value="U=1-71"/>
</dbReference>
<dbReference type="PDB" id="8EIU">
    <property type="method" value="EM"/>
    <property type="resolution" value="2.24 A"/>
    <property type="chains" value="U=1-71"/>
</dbReference>
<dbReference type="PDB" id="8EKC">
    <property type="method" value="EM"/>
    <property type="resolution" value="2.70 A"/>
    <property type="chains" value="u=1-71"/>
</dbReference>
<dbReference type="PDB" id="8EMM">
    <property type="method" value="EM"/>
    <property type="resolution" value="2.10 A"/>
    <property type="chains" value="U=1-71"/>
</dbReference>
<dbReference type="PDB" id="8FIZ">
    <property type="method" value="EM"/>
    <property type="resolution" value="3.80 A"/>
    <property type="chains" value="AU=1-71"/>
</dbReference>
<dbReference type="PDB" id="8FTO">
    <property type="method" value="EM"/>
    <property type="resolution" value="1.85 A"/>
    <property type="chains" value="U=1-71"/>
</dbReference>
<dbReference type="PDB" id="8FZD">
    <property type="method" value="EM"/>
    <property type="resolution" value="3.10 A"/>
    <property type="chains" value="u=1-71"/>
</dbReference>
<dbReference type="PDB" id="8FZE">
    <property type="method" value="EM"/>
    <property type="resolution" value="3.00 A"/>
    <property type="chains" value="u=1-71"/>
</dbReference>
<dbReference type="PDB" id="8FZF">
    <property type="method" value="EM"/>
    <property type="resolution" value="3.20 A"/>
    <property type="chains" value="u=1-71"/>
</dbReference>
<dbReference type="PDB" id="8FZG">
    <property type="method" value="EM"/>
    <property type="resolution" value="3.10 A"/>
    <property type="chains" value="u=1-71"/>
</dbReference>
<dbReference type="PDB" id="8FZH">
    <property type="method" value="EM"/>
    <property type="resolution" value="2.90 A"/>
    <property type="chains" value="u=1-71"/>
</dbReference>
<dbReference type="PDB" id="8FZI">
    <property type="method" value="EM"/>
    <property type="resolution" value="3.10 A"/>
    <property type="chains" value="u=1-71"/>
</dbReference>
<dbReference type="PDB" id="8FZJ">
    <property type="method" value="EM"/>
    <property type="resolution" value="3.00 A"/>
    <property type="chains" value="u=1-71"/>
</dbReference>
<dbReference type="PDB" id="8G2U">
    <property type="method" value="EM"/>
    <property type="resolution" value="3.00 A"/>
    <property type="chains" value="t=4-54"/>
</dbReference>
<dbReference type="PDB" id="8G31">
    <property type="method" value="EM"/>
    <property type="resolution" value="3.20 A"/>
    <property type="chains" value="t=4-54"/>
</dbReference>
<dbReference type="PDB" id="8G34">
    <property type="method" value="EM"/>
    <property type="resolution" value="3.20 A"/>
    <property type="chains" value="t=4-54"/>
</dbReference>
<dbReference type="PDB" id="8G38">
    <property type="method" value="EM"/>
    <property type="resolution" value="3.20 A"/>
    <property type="chains" value="t=4-54"/>
</dbReference>
<dbReference type="PDB" id="8G6W">
    <property type="method" value="EM"/>
    <property type="resolution" value="2.02 A"/>
    <property type="chains" value="U=1-71"/>
</dbReference>
<dbReference type="PDB" id="8G7P">
    <property type="method" value="EM"/>
    <property type="resolution" value="2.90 A"/>
    <property type="chains" value="u=1-71"/>
</dbReference>
<dbReference type="PDB" id="8G7Q">
    <property type="method" value="EM"/>
    <property type="resolution" value="3.10 A"/>
    <property type="chains" value="u=1-71"/>
</dbReference>
<dbReference type="PDB" id="8G7R">
    <property type="method" value="EM"/>
    <property type="resolution" value="2.80 A"/>
    <property type="chains" value="u=1-71"/>
</dbReference>
<dbReference type="PDB" id="8G7S">
    <property type="method" value="EM"/>
    <property type="resolution" value="3.10 A"/>
    <property type="chains" value="u=1-71"/>
</dbReference>
<dbReference type="PDB" id="8HSP">
    <property type="method" value="EM"/>
    <property type="resolution" value="2.32 A"/>
    <property type="chains" value="U=1-71"/>
</dbReference>
<dbReference type="PDB" id="8HTZ">
    <property type="method" value="EM"/>
    <property type="resolution" value="2.40 A"/>
    <property type="chains" value="U=1-71"/>
</dbReference>
<dbReference type="PDB" id="8HU1">
    <property type="method" value="EM"/>
    <property type="resolution" value="2.69 A"/>
    <property type="chains" value="U=1-71"/>
</dbReference>
<dbReference type="PDB" id="8IFB">
    <property type="method" value="EM"/>
    <property type="resolution" value="2.43 A"/>
    <property type="chains" value="U=1-71"/>
</dbReference>
<dbReference type="PDB" id="8IFC">
    <property type="method" value="EM"/>
    <property type="resolution" value="2.90 A"/>
    <property type="chains" value="U=1-71"/>
</dbReference>
<dbReference type="PDB" id="8JSG">
    <property type="method" value="EM"/>
    <property type="resolution" value="4.60 A"/>
    <property type="chains" value="2=2-54"/>
</dbReference>
<dbReference type="PDB" id="8JSH">
    <property type="method" value="EM"/>
    <property type="resolution" value="4.40 A"/>
    <property type="chains" value="2=1-71"/>
</dbReference>
<dbReference type="PDB" id="8K3O">
    <property type="method" value="EM"/>
    <property type="resolution" value="3.88 A"/>
    <property type="chains" value="X=1-71"/>
</dbReference>
<dbReference type="PDB" id="8K4E">
    <property type="method" value="EM"/>
    <property type="resolution" value="3.40 A"/>
    <property type="chains" value="X=1-71"/>
</dbReference>
<dbReference type="PDB" id="8P16">
    <property type="method" value="EM"/>
    <property type="resolution" value="2.77 A"/>
    <property type="chains" value="z=1-71"/>
</dbReference>
<dbReference type="PDB" id="8P17">
    <property type="method" value="EM"/>
    <property type="resolution" value="2.78 A"/>
    <property type="chains" value="z=1-71"/>
</dbReference>
<dbReference type="PDB" id="8P18">
    <property type="method" value="EM"/>
    <property type="resolution" value="2.77 A"/>
    <property type="chains" value="z=1-71"/>
</dbReference>
<dbReference type="PDB" id="8PEG">
    <property type="method" value="EM"/>
    <property type="resolution" value="3.30 A"/>
    <property type="chains" value="U=1-71"/>
</dbReference>
<dbReference type="PDB" id="8PHJ">
    <property type="method" value="EM"/>
    <property type="resolution" value="3.67 A"/>
    <property type="chains" value="U=1-71"/>
</dbReference>
<dbReference type="PDB" id="8PKL">
    <property type="method" value="EM"/>
    <property type="resolution" value="3.09 A"/>
    <property type="chains" value="U=1-71"/>
</dbReference>
<dbReference type="PDB" id="8PVA">
    <property type="method" value="EM"/>
    <property type="resolution" value="4.50 A"/>
    <property type="chains" value="U=1-71"/>
</dbReference>
<dbReference type="PDB" id="8Q4F">
    <property type="method" value="EM"/>
    <property type="resolution" value="3.10 A"/>
    <property type="chains" value="U=1-71"/>
</dbReference>
<dbReference type="PDB" id="8QBT">
    <property type="method" value="EM"/>
    <property type="resolution" value="2.20 A"/>
    <property type="chains" value="3=1-71"/>
</dbReference>
<dbReference type="PDB" id="8QK7">
    <property type="method" value="EM"/>
    <property type="resolution" value="2.77 A"/>
    <property type="chains" value="z=1-71"/>
</dbReference>
<dbReference type="PDB" id="8QOA">
    <property type="method" value="EM"/>
    <property type="resolution" value="2.00 A"/>
    <property type="chains" value="U=1-71"/>
</dbReference>
<dbReference type="PDB" id="8R3V">
    <property type="method" value="EM"/>
    <property type="resolution" value="3.28 A"/>
    <property type="chains" value="U1/U2=1-71"/>
</dbReference>
<dbReference type="PDB" id="8R6C">
    <property type="method" value="EM"/>
    <property type="resolution" value="2.20 A"/>
    <property type="chains" value="U=1-71"/>
</dbReference>
<dbReference type="PDB" id="8R8M">
    <property type="method" value="EM"/>
    <property type="resolution" value="2.40 A"/>
    <property type="chains" value="U=1-71"/>
</dbReference>
<dbReference type="PDB" id="8RCL">
    <property type="method" value="EM"/>
    <property type="resolution" value="3.49 A"/>
    <property type="chains" value="U1/U2=1-71"/>
</dbReference>
<dbReference type="PDB" id="8RCM">
    <property type="method" value="EM"/>
    <property type="resolution" value="3.59 A"/>
    <property type="chains" value="U1/U2=1-71"/>
</dbReference>
<dbReference type="PDB" id="8RCS">
    <property type="method" value="EM"/>
    <property type="resolution" value="4.46 A"/>
    <property type="chains" value="U1/U2=1-71"/>
</dbReference>
<dbReference type="PDB" id="8RCT">
    <property type="method" value="EM"/>
    <property type="resolution" value="5.32 A"/>
    <property type="chains" value="U1/U2=1-71"/>
</dbReference>
<dbReference type="PDB" id="8SYL">
    <property type="method" value="EM"/>
    <property type="resolution" value="2.90 A"/>
    <property type="chains" value="u=1-71"/>
</dbReference>
<dbReference type="PDB" id="8T5D">
    <property type="method" value="EM"/>
    <property type="resolution" value="3.20 A"/>
    <property type="chains" value="t=4-54"/>
</dbReference>
<dbReference type="PDB" id="8UPO">
    <property type="method" value="EM"/>
    <property type="resolution" value="5.50 A"/>
    <property type="chains" value="F=1-71"/>
</dbReference>
<dbReference type="PDB" id="8UPR">
    <property type="method" value="EM"/>
    <property type="resolution" value="5.30 A"/>
    <property type="chains" value="F=1-71"/>
</dbReference>
<dbReference type="PDB" id="8UQL">
    <property type="method" value="EM"/>
    <property type="resolution" value="3.20 A"/>
    <property type="chains" value="F=1-71"/>
</dbReference>
<dbReference type="PDB" id="8UQM">
    <property type="method" value="EM"/>
    <property type="resolution" value="5.30 A"/>
    <property type="chains" value="F=1-71"/>
</dbReference>
<dbReference type="PDB" id="8UQP">
    <property type="method" value="EM"/>
    <property type="resolution" value="3.80 A"/>
    <property type="chains" value="F=1-71"/>
</dbReference>
<dbReference type="PDB" id="8UR0">
    <property type="method" value="EM"/>
    <property type="resolution" value="3.40 A"/>
    <property type="chains" value="F=1-71"/>
</dbReference>
<dbReference type="PDB" id="8URH">
    <property type="method" value="EM"/>
    <property type="resolution" value="5.70 A"/>
    <property type="chains" value="F=1-71"/>
</dbReference>
<dbReference type="PDB" id="8URI">
    <property type="method" value="EM"/>
    <property type="resolution" value="5.30 A"/>
    <property type="chains" value="F=1-71"/>
</dbReference>
<dbReference type="PDB" id="8URX">
    <property type="method" value="EM"/>
    <property type="resolution" value="6.60 A"/>
    <property type="chains" value="F=1-71"/>
</dbReference>
<dbReference type="PDB" id="8URY">
    <property type="method" value="EM"/>
    <property type="resolution" value="3.10 A"/>
    <property type="chains" value="F=1-71"/>
</dbReference>
<dbReference type="PDB" id="8VS9">
    <property type="method" value="EM"/>
    <property type="resolution" value="3.90 A"/>
    <property type="chains" value="S21=1-71"/>
</dbReference>
<dbReference type="PDB" id="8VSA">
    <property type="method" value="EM"/>
    <property type="resolution" value="3.70 A"/>
    <property type="chains" value="S21=1-71"/>
</dbReference>
<dbReference type="PDB" id="8YUO">
    <property type="method" value="EM"/>
    <property type="resolution" value="2.25 A"/>
    <property type="chains" value="U=1-71"/>
</dbReference>
<dbReference type="PDB" id="8YUP">
    <property type="method" value="EM"/>
    <property type="resolution" value="2.39 A"/>
    <property type="chains" value="U=1-71"/>
</dbReference>
<dbReference type="PDB" id="8YUQ">
    <property type="method" value="EM"/>
    <property type="resolution" value="2.41 A"/>
    <property type="chains" value="U=1-71"/>
</dbReference>
<dbReference type="PDB" id="8YUR">
    <property type="method" value="EM"/>
    <property type="resolution" value="2.47 A"/>
    <property type="chains" value="U=1-71"/>
</dbReference>
<dbReference type="PDB" id="8YUS">
    <property type="method" value="EM"/>
    <property type="resolution" value="2.43 A"/>
    <property type="chains" value="U=1-71"/>
</dbReference>
<dbReference type="PDB" id="9DUK">
    <property type="method" value="EM"/>
    <property type="resolution" value="2.56 A"/>
    <property type="chains" value="U=1-71"/>
</dbReference>
<dbReference type="PDB" id="9DUL">
    <property type="method" value="EM"/>
    <property type="resolution" value="2.56 A"/>
    <property type="chains" value="U=1-71"/>
</dbReference>
<dbReference type="PDB" id="9FBV">
    <property type="method" value="EM"/>
    <property type="resolution" value="2.40 A"/>
    <property type="chains" value="U=1-71"/>
</dbReference>
<dbReference type="PDB" id="9GFT">
    <property type="method" value="EM"/>
    <property type="resolution" value="3.10 A"/>
    <property type="chains" value="A1/v=1-71"/>
</dbReference>
<dbReference type="PDB" id="9GGR">
    <property type="method" value="EM"/>
    <property type="resolution" value="3.20 A"/>
    <property type="chains" value="A1/v=1-71"/>
</dbReference>
<dbReference type="PDB" id="9GR1">
    <property type="method" value="EM"/>
    <property type="resolution" value="3.17 A"/>
    <property type="chains" value="U=1-71"/>
</dbReference>
<dbReference type="PDB" id="9GUP">
    <property type="method" value="EM"/>
    <property type="resolution" value="2.80 A"/>
    <property type="chains" value="V=1-71"/>
</dbReference>
<dbReference type="PDB" id="9GUQ">
    <property type="method" value="EM"/>
    <property type="resolution" value="3.10 A"/>
    <property type="chains" value="V=1-71"/>
</dbReference>
<dbReference type="PDB" id="9GUS">
    <property type="method" value="EM"/>
    <property type="resolution" value="3.50 A"/>
    <property type="chains" value="V=1-71"/>
</dbReference>
<dbReference type="PDB" id="9GUT">
    <property type="method" value="EM"/>
    <property type="resolution" value="2.80 A"/>
    <property type="chains" value="V=1-71"/>
</dbReference>
<dbReference type="PDB" id="9GUU">
    <property type="method" value="EM"/>
    <property type="resolution" value="2.50 A"/>
    <property type="chains" value="V=1-71"/>
</dbReference>
<dbReference type="PDB" id="9GUV">
    <property type="method" value="EM"/>
    <property type="resolution" value="3.00 A"/>
    <property type="chains" value="V=1-71"/>
</dbReference>
<dbReference type="PDB" id="9GUX">
    <property type="method" value="EM"/>
    <property type="resolution" value="3.30 A"/>
    <property type="chains" value="V=1-71"/>
</dbReference>
<dbReference type="PDB" id="9MOR">
    <property type="method" value="EM"/>
    <property type="resolution" value="2.65 A"/>
    <property type="chains" value="z=1-71"/>
</dbReference>
<dbReference type="PDB" id="9MQ4">
    <property type="method" value="EM"/>
    <property type="resolution" value="2.78 A"/>
    <property type="chains" value="z=1-71"/>
</dbReference>
<dbReference type="PDBsum" id="2YKR"/>
<dbReference type="PDBsum" id="3J9Y"/>
<dbReference type="PDBsum" id="3J9Z"/>
<dbReference type="PDBsum" id="3JA1"/>
<dbReference type="PDBsum" id="3JBU"/>
<dbReference type="PDBsum" id="3JBV"/>
<dbReference type="PDBsum" id="3JCD"/>
<dbReference type="PDBsum" id="3JCE"/>
<dbReference type="PDBsum" id="3JCJ"/>
<dbReference type="PDBsum" id="3JCN"/>
<dbReference type="PDBsum" id="4A2I"/>
<dbReference type="PDBsum" id="4ADV"/>
<dbReference type="PDBsum" id="4U1U"/>
<dbReference type="PDBsum" id="4U1V"/>
<dbReference type="PDBsum" id="4U20"/>
<dbReference type="PDBsum" id="4U24"/>
<dbReference type="PDBsum" id="4U25"/>
<dbReference type="PDBsum" id="4U26"/>
<dbReference type="PDBsum" id="4U27"/>
<dbReference type="PDBsum" id="4V4H"/>
<dbReference type="PDBsum" id="4V4Q"/>
<dbReference type="PDBsum" id="4V50"/>
<dbReference type="PDBsum" id="4V52"/>
<dbReference type="PDBsum" id="4V53"/>
<dbReference type="PDBsum" id="4V54"/>
<dbReference type="PDBsum" id="4V55"/>
<dbReference type="PDBsum" id="4V56"/>
<dbReference type="PDBsum" id="4V57"/>
<dbReference type="PDBsum" id="4V5B"/>
<dbReference type="PDBsum" id="4V5H"/>
<dbReference type="PDBsum" id="4V5Y"/>
<dbReference type="PDBsum" id="4V64"/>
<dbReference type="PDBsum" id="4V65"/>
<dbReference type="PDBsum" id="4V66"/>
<dbReference type="PDBsum" id="4V69"/>
<dbReference type="PDBsum" id="4V6C"/>
<dbReference type="PDBsum" id="4V6D"/>
<dbReference type="PDBsum" id="4V6E"/>
<dbReference type="PDBsum" id="4V6K"/>
<dbReference type="PDBsum" id="4V6L"/>
<dbReference type="PDBsum" id="4V6M"/>
<dbReference type="PDBsum" id="4V6N"/>
<dbReference type="PDBsum" id="4V6O"/>
<dbReference type="PDBsum" id="4V6P"/>
<dbReference type="PDBsum" id="4V6Q"/>
<dbReference type="PDBsum" id="4V6R"/>
<dbReference type="PDBsum" id="4V6S"/>
<dbReference type="PDBsum" id="4V6T"/>
<dbReference type="PDBsum" id="4V6V"/>
<dbReference type="PDBsum" id="4V6Y"/>
<dbReference type="PDBsum" id="4V6Z"/>
<dbReference type="PDBsum" id="4V70"/>
<dbReference type="PDBsum" id="4V71"/>
<dbReference type="PDBsum" id="4V72"/>
<dbReference type="PDBsum" id="4V73"/>
<dbReference type="PDBsum" id="4V74"/>
<dbReference type="PDBsum" id="4V75"/>
<dbReference type="PDBsum" id="4V76"/>
<dbReference type="PDBsum" id="4V77"/>
<dbReference type="PDBsum" id="4V78"/>
<dbReference type="PDBsum" id="4V79"/>
<dbReference type="PDBsum" id="4V7A"/>
<dbReference type="PDBsum" id="4V7B"/>
<dbReference type="PDBsum" id="4V7C"/>
<dbReference type="PDBsum" id="4V7D"/>
<dbReference type="PDBsum" id="4V7I"/>
<dbReference type="PDBsum" id="4V7S"/>
<dbReference type="PDBsum" id="4V7T"/>
<dbReference type="PDBsum" id="4V7U"/>
<dbReference type="PDBsum" id="4V7V"/>
<dbReference type="PDBsum" id="4V85"/>
<dbReference type="PDBsum" id="4V89"/>
<dbReference type="PDBsum" id="4V9C"/>
<dbReference type="PDBsum" id="4V9D"/>
<dbReference type="PDBsum" id="4V9O"/>
<dbReference type="PDBsum" id="4V9P"/>
<dbReference type="PDBsum" id="4WF1"/>
<dbReference type="PDBsum" id="4WOI"/>
<dbReference type="PDBsum" id="4WWW"/>
<dbReference type="PDBsum" id="4YBB"/>
<dbReference type="PDBsum" id="5AFI"/>
<dbReference type="PDBsum" id="5H5U"/>
<dbReference type="PDBsum" id="5IQR"/>
<dbReference type="PDBsum" id="5J5B"/>
<dbReference type="PDBsum" id="5J7L"/>
<dbReference type="PDBsum" id="5J88"/>
<dbReference type="PDBsum" id="5J8A"/>
<dbReference type="PDBsum" id="5J91"/>
<dbReference type="PDBsum" id="5JC9"/>
<dbReference type="PDBsum" id="5JTE"/>
<dbReference type="PDBsum" id="5JU8"/>
<dbReference type="PDBsum" id="5KCR"/>
<dbReference type="PDBsum" id="5KCS"/>
<dbReference type="PDBsum" id="5KPS"/>
<dbReference type="PDBsum" id="5KPV"/>
<dbReference type="PDBsum" id="5KPW"/>
<dbReference type="PDBsum" id="5KPX"/>
<dbReference type="PDBsum" id="5L3P"/>
<dbReference type="PDBsum" id="5LZA"/>
<dbReference type="PDBsum" id="5LZB"/>
<dbReference type="PDBsum" id="5LZC"/>
<dbReference type="PDBsum" id="5LZD"/>
<dbReference type="PDBsum" id="5LZE"/>
<dbReference type="PDBsum" id="5LZF"/>
<dbReference type="PDBsum" id="5MDV"/>
<dbReference type="PDBsum" id="5MDW"/>
<dbReference type="PDBsum" id="5MDY"/>
<dbReference type="PDBsum" id="5MDZ"/>
<dbReference type="PDBsum" id="5ME0"/>
<dbReference type="PDBsum" id="5ME1"/>
<dbReference type="PDBsum" id="5MGP"/>
<dbReference type="PDBsum" id="5MY1"/>
<dbReference type="PDBsum" id="5NP6"/>
<dbReference type="PDBsum" id="5NWY"/>
<dbReference type="PDBsum" id="5O2R"/>
<dbReference type="PDBsum" id="5U4I"/>
<dbReference type="PDBsum" id="5U9F"/>
<dbReference type="PDBsum" id="5U9G"/>
<dbReference type="PDBsum" id="5UYK"/>
<dbReference type="PDBsum" id="5UYL"/>
<dbReference type="PDBsum" id="5UYM"/>
<dbReference type="PDBsum" id="5UYN"/>
<dbReference type="PDBsum" id="5UYP"/>
<dbReference type="PDBsum" id="5UYQ"/>
<dbReference type="PDBsum" id="5WDT"/>
<dbReference type="PDBsum" id="5WE4"/>
<dbReference type="PDBsum" id="5WE6"/>
<dbReference type="PDBsum" id="5WF0"/>
<dbReference type="PDBsum" id="5WFK"/>
<dbReference type="PDBsum" id="5WFS"/>
<dbReference type="PDBsum" id="6AWB"/>
<dbReference type="PDBsum" id="6AWC"/>
<dbReference type="PDBsum" id="6AWD"/>
<dbReference type="PDBsum" id="6BU8"/>
<dbReference type="PDBsum" id="6C4I"/>
<dbReference type="PDBsum" id="6DNC"/>
<dbReference type="PDBsum" id="6ENF"/>
<dbReference type="PDBsum" id="6ENJ"/>
<dbReference type="PDBsum" id="6ENU"/>
<dbReference type="PDBsum" id="6GWT"/>
<dbReference type="PDBsum" id="6GXM"/>
<dbReference type="PDBsum" id="6GXN"/>
<dbReference type="PDBsum" id="6GXO"/>
<dbReference type="PDBsum" id="6GXP"/>
<dbReference type="PDBsum" id="6H4N"/>
<dbReference type="PDBsum" id="6H58"/>
<dbReference type="PDBsum" id="6HRM"/>
<dbReference type="PDBsum" id="6I7V"/>
<dbReference type="PDBsum" id="6O7K"/>
<dbReference type="PDBsum" id="6O9J"/>
<dbReference type="PDBsum" id="6O9K"/>
<dbReference type="PDBsum" id="6OFX"/>
<dbReference type="PDBsum" id="6OG7"/>
<dbReference type="PDBsum" id="6OGF"/>
<dbReference type="PDBsum" id="6OGG"/>
<dbReference type="PDBsum" id="6OGI"/>
<dbReference type="PDBsum" id="6OM6"/>
<dbReference type="PDBsum" id="6ORE"/>
<dbReference type="PDBsum" id="6ORL"/>
<dbReference type="PDBsum" id="6OSK"/>
<dbReference type="PDBsum" id="6OSQ"/>
<dbReference type="PDBsum" id="6OST"/>
<dbReference type="PDBsum" id="6OT3"/>
<dbReference type="PDBsum" id="6OUO"/>
<dbReference type="PDBsum" id="6Q97"/>
<dbReference type="PDBsum" id="6Q98"/>
<dbReference type="PDBsum" id="6Q9A"/>
<dbReference type="PDBsum" id="6SZS"/>
<dbReference type="PDBsum" id="6TBV"/>
<dbReference type="PDBsum" id="6TC3"/>
<dbReference type="PDBsum" id="6VU3"/>
<dbReference type="PDBsum" id="6VWL"/>
<dbReference type="PDBsum" id="6VWM"/>
<dbReference type="PDBsum" id="6VWN"/>
<dbReference type="PDBsum" id="6VYQ"/>
<dbReference type="PDBsum" id="6VYR"/>
<dbReference type="PDBsum" id="6VYS"/>
<dbReference type="PDBsum" id="6VYT"/>
<dbReference type="PDBsum" id="6VYU"/>
<dbReference type="PDBsum" id="6VYW"/>
<dbReference type="PDBsum" id="6VYX"/>
<dbReference type="PDBsum" id="6VYY"/>
<dbReference type="PDBsum" id="6VYZ"/>
<dbReference type="PDBsum" id="6VZ2"/>
<dbReference type="PDBsum" id="6VZ3"/>
<dbReference type="PDBsum" id="6VZ5"/>
<dbReference type="PDBsum" id="6VZ7"/>
<dbReference type="PDBsum" id="6VZJ"/>
<dbReference type="PDBsum" id="6WD0"/>
<dbReference type="PDBsum" id="6WD1"/>
<dbReference type="PDBsum" id="6WD2"/>
<dbReference type="PDBsum" id="6WD3"/>
<dbReference type="PDBsum" id="6WD4"/>
<dbReference type="PDBsum" id="6WD5"/>
<dbReference type="PDBsum" id="6WD6"/>
<dbReference type="PDBsum" id="6WD7"/>
<dbReference type="PDBsum" id="6WD8"/>
<dbReference type="PDBsum" id="6WD9"/>
<dbReference type="PDBsum" id="6WDA"/>
<dbReference type="PDBsum" id="6WDB"/>
<dbReference type="PDBsum" id="6WDC"/>
<dbReference type="PDBsum" id="6WDD"/>
<dbReference type="PDBsum" id="6WDE"/>
<dbReference type="PDBsum" id="6WDF"/>
<dbReference type="PDBsum" id="6WDG"/>
<dbReference type="PDBsum" id="6WDH"/>
<dbReference type="PDBsum" id="6WDI"/>
<dbReference type="PDBsum" id="6WDJ"/>
<dbReference type="PDBsum" id="6WDK"/>
<dbReference type="PDBsum" id="6WDL"/>
<dbReference type="PDBsum" id="6WDM"/>
<dbReference type="PDBsum" id="6WNV"/>
<dbReference type="PDBsum" id="6WNW"/>
<dbReference type="PDBsum" id="6X6T"/>
<dbReference type="PDBsum" id="6X7F"/>
<dbReference type="PDBsum" id="6X7K"/>
<dbReference type="PDBsum" id="6X9Q"/>
<dbReference type="PDBsum" id="6XDQ"/>
<dbReference type="PDBsum" id="6XDR"/>
<dbReference type="PDBsum" id="6XE0"/>
<dbReference type="PDBsum" id="6XGF"/>
<dbReference type="PDBsum" id="6XII"/>
<dbReference type="PDBsum" id="6XIJ"/>
<dbReference type="PDBsum" id="6XZA"/>
<dbReference type="PDBsum" id="6XZB"/>
<dbReference type="PDBsum" id="6Y69"/>
<dbReference type="PDBsum" id="6ZTJ"/>
<dbReference type="PDBsum" id="6ZTL"/>
<dbReference type="PDBsum" id="6ZTM"/>
<dbReference type="PDBsum" id="6ZTN"/>
<dbReference type="PDBsum" id="6ZTO"/>
<dbReference type="PDBsum" id="6ZTP"/>
<dbReference type="PDBsum" id="6ZU1"/>
<dbReference type="PDBsum" id="7ABZ"/>
<dbReference type="PDBsum" id="7AC7"/>
<dbReference type="PDBsum" id="7ACJ"/>
<dbReference type="PDBsum" id="7ACR"/>
<dbReference type="PDBsum" id="7AFO"/>
<dbReference type="PDBsum" id="7B5K"/>
<dbReference type="PDBsum" id="7BOD"/>
<dbReference type="PDBsum" id="7BOE"/>
<dbReference type="PDBsum" id="7BOI"/>
<dbReference type="PDBsum" id="7D6Z"/>
<dbReference type="PDBsum" id="7D80"/>
<dbReference type="PDBsum" id="7JSS"/>
<dbReference type="PDBsum" id="7JSW"/>
<dbReference type="PDBsum" id="7JSZ"/>
<dbReference type="PDBsum" id="7JT1"/>
<dbReference type="PDBsum" id="7JT2"/>
<dbReference type="PDBsum" id="7JT3"/>
<dbReference type="PDBsum" id="7K00"/>
<dbReference type="PDBsum" id="7K50"/>
<dbReference type="PDBsum" id="7K51"/>
<dbReference type="PDBsum" id="7K52"/>
<dbReference type="PDBsum" id="7K53"/>
<dbReference type="PDBsum" id="7K54"/>
<dbReference type="PDBsum" id="7K55"/>
<dbReference type="PDBsum" id="7LV0"/>
<dbReference type="PDBsum" id="7M5D"/>
<dbReference type="PDBsum" id="7N1P"/>
<dbReference type="PDBsum" id="7N2C"/>
<dbReference type="PDBsum" id="7N2U"/>
<dbReference type="PDBsum" id="7N2V"/>
<dbReference type="PDBsum" id="7N30"/>
<dbReference type="PDBsum" id="7N31"/>
<dbReference type="PDBsum" id="7NAR"/>
<dbReference type="PDBsum" id="7NAS"/>
<dbReference type="PDBsum" id="7NAT"/>
<dbReference type="PDBsum" id="7NBU"/>
<dbReference type="PDBsum" id="7O19"/>
<dbReference type="PDBsum" id="7O1A"/>
<dbReference type="PDBsum" id="7O1C"/>
<dbReference type="PDBsum" id="7O5H"/>
<dbReference type="PDBsum" id="7OE1"/>
<dbReference type="PDBsum" id="7OIZ"/>
<dbReference type="PDBsum" id="7OJ0"/>
<dbReference type="PDBsum" id="7P3K"/>
<dbReference type="PDBsum" id="7PJU"/>
<dbReference type="PDBsum" id="7PJV"/>
<dbReference type="PDBsum" id="7PJY"/>
<dbReference type="PDBsum" id="7QGR"/>
<dbReference type="PDBsum" id="7S1G"/>
<dbReference type="PDBsum" id="7S1H"/>
<dbReference type="PDBsum" id="7S1I"/>
<dbReference type="PDBsum" id="7S1J"/>
<dbReference type="PDBsum" id="7S1K"/>
<dbReference type="PDBsum" id="7SA4"/>
<dbReference type="PDBsum" id="7SS9"/>
<dbReference type="PDBsum" id="7SSD"/>
<dbReference type="PDBsum" id="7SSL"/>
<dbReference type="PDBsum" id="7SSN"/>
<dbReference type="PDBsum" id="7SSO"/>
<dbReference type="PDBsum" id="7SSW"/>
<dbReference type="PDBsum" id="7ST2"/>
<dbReference type="PDBsum" id="7ST6"/>
<dbReference type="PDBsum" id="7ST7"/>
<dbReference type="PDBsum" id="7TOS"/>
<dbReference type="PDBsum" id="7UG7"/>
<dbReference type="PDBsum" id="7UPH"/>
<dbReference type="PDBsum" id="7Y7C"/>
<dbReference type="PDBsum" id="7Y7D"/>
<dbReference type="PDBsum" id="7Y7E"/>
<dbReference type="PDBsum" id="7Y7F"/>
<dbReference type="PDBsum" id="7Y7G"/>
<dbReference type="PDBsum" id="7Y7H"/>
<dbReference type="PDBsum" id="7ZTA"/>
<dbReference type="PDBsum" id="8A3L"/>
<dbReference type="PDBsum" id="8AKN"/>
<dbReference type="PDBsum" id="8AM9"/>
<dbReference type="PDBsum" id="8AYE"/>
<dbReference type="PDBsum" id="8B0X"/>
<dbReference type="PDBsum" id="8B7Y"/>
<dbReference type="PDBsum" id="8BF7"/>
<dbReference type="PDBsum" id="8BGE"/>
<dbReference type="PDBsum" id="8BGH"/>
<dbReference type="PDBsum" id="8BH4"/>
<dbReference type="PDBsum" id="8BHJ"/>
<dbReference type="PDBsum" id="8BHL"/>
<dbReference type="PDBsum" id="8BHN"/>
<dbReference type="PDBsum" id="8BHP"/>
<dbReference type="PDBsum" id="8BIL"/>
<dbReference type="PDBsum" id="8BIM"/>
<dbReference type="PDBsum" id="8CAI"/>
<dbReference type="PDBsum" id="8CEP"/>
<dbReference type="PDBsum" id="8CGJ"/>
<dbReference type="PDBsum" id="8CGR"/>
<dbReference type="PDBsum" id="8CGU"/>
<dbReference type="PDBsum" id="8EIU"/>
<dbReference type="PDBsum" id="8EKC"/>
<dbReference type="PDBsum" id="8EMM"/>
<dbReference type="PDBsum" id="8FIZ"/>
<dbReference type="PDBsum" id="8FTO"/>
<dbReference type="PDBsum" id="8FZD"/>
<dbReference type="PDBsum" id="8FZE"/>
<dbReference type="PDBsum" id="8FZF"/>
<dbReference type="PDBsum" id="8FZG"/>
<dbReference type="PDBsum" id="8FZH"/>
<dbReference type="PDBsum" id="8FZI"/>
<dbReference type="PDBsum" id="8FZJ"/>
<dbReference type="PDBsum" id="8G2U"/>
<dbReference type="PDBsum" id="8G31"/>
<dbReference type="PDBsum" id="8G34"/>
<dbReference type="PDBsum" id="8G38"/>
<dbReference type="PDBsum" id="8G6W"/>
<dbReference type="PDBsum" id="8G7P"/>
<dbReference type="PDBsum" id="8G7Q"/>
<dbReference type="PDBsum" id="8G7R"/>
<dbReference type="PDBsum" id="8G7S"/>
<dbReference type="PDBsum" id="8HSP"/>
<dbReference type="PDBsum" id="8HTZ"/>
<dbReference type="PDBsum" id="8HU1"/>
<dbReference type="PDBsum" id="8IFB"/>
<dbReference type="PDBsum" id="8IFC"/>
<dbReference type="PDBsum" id="8JSG"/>
<dbReference type="PDBsum" id="8JSH"/>
<dbReference type="PDBsum" id="8K3O"/>
<dbReference type="PDBsum" id="8K4E"/>
<dbReference type="PDBsum" id="8P16"/>
<dbReference type="PDBsum" id="8P17"/>
<dbReference type="PDBsum" id="8P18"/>
<dbReference type="PDBsum" id="8PEG"/>
<dbReference type="PDBsum" id="8PHJ"/>
<dbReference type="PDBsum" id="8PKL"/>
<dbReference type="PDBsum" id="8PVA"/>
<dbReference type="PDBsum" id="8Q4F"/>
<dbReference type="PDBsum" id="8QBT"/>
<dbReference type="PDBsum" id="8QK7"/>
<dbReference type="PDBsum" id="8QOA"/>
<dbReference type="PDBsum" id="8R3V"/>
<dbReference type="PDBsum" id="8R6C"/>
<dbReference type="PDBsum" id="8R8M"/>
<dbReference type="PDBsum" id="8RCL"/>
<dbReference type="PDBsum" id="8RCM"/>
<dbReference type="PDBsum" id="8RCS"/>
<dbReference type="PDBsum" id="8RCT"/>
<dbReference type="PDBsum" id="8SYL"/>
<dbReference type="PDBsum" id="8T5D"/>
<dbReference type="PDBsum" id="8UPO"/>
<dbReference type="PDBsum" id="8UPR"/>
<dbReference type="PDBsum" id="8UQL"/>
<dbReference type="PDBsum" id="8UQM"/>
<dbReference type="PDBsum" id="8UQP"/>
<dbReference type="PDBsum" id="8UR0"/>
<dbReference type="PDBsum" id="8URH"/>
<dbReference type="PDBsum" id="8URI"/>
<dbReference type="PDBsum" id="8URX"/>
<dbReference type="PDBsum" id="8URY"/>
<dbReference type="PDBsum" id="8VS9"/>
<dbReference type="PDBsum" id="8VSA"/>
<dbReference type="PDBsum" id="8YUO"/>
<dbReference type="PDBsum" id="8YUP"/>
<dbReference type="PDBsum" id="8YUQ"/>
<dbReference type="PDBsum" id="8YUR"/>
<dbReference type="PDBsum" id="8YUS"/>
<dbReference type="PDBsum" id="9DUK"/>
<dbReference type="PDBsum" id="9DUL"/>
<dbReference type="PDBsum" id="9FBV"/>
<dbReference type="PDBsum" id="9GFT"/>
<dbReference type="PDBsum" id="9GGR"/>
<dbReference type="PDBsum" id="9GR1"/>
<dbReference type="PDBsum" id="9GUP"/>
<dbReference type="PDBsum" id="9GUQ"/>
<dbReference type="PDBsum" id="9GUS"/>
<dbReference type="PDBsum" id="9GUT"/>
<dbReference type="PDBsum" id="9GUU"/>
<dbReference type="PDBsum" id="9GUV"/>
<dbReference type="PDBsum" id="9GUX"/>
<dbReference type="PDBsum" id="9MOR"/>
<dbReference type="PDBsum" id="9MQ4"/>
<dbReference type="EMDB" id="EMD-0076"/>
<dbReference type="EMDB" id="EMD-0080"/>
<dbReference type="EMDB" id="EMD-0081"/>
<dbReference type="EMDB" id="EMD-0082"/>
<dbReference type="EMDB" id="EMD-0083"/>
<dbReference type="EMDB" id="EMD-0137"/>
<dbReference type="EMDB" id="EMD-0139"/>
<dbReference type="EMDB" id="EMD-0261"/>
<dbReference type="EMDB" id="EMD-10353"/>
<dbReference type="EMDB" id="EMD-10453"/>
<dbReference type="EMDB" id="EMD-10458"/>
<dbReference type="EMDB" id="EMD-10656"/>
<dbReference type="EMDB" id="EMD-10657"/>
<dbReference type="EMDB" id="EMD-10705"/>
<dbReference type="EMDB" id="EMD-11419"/>
<dbReference type="EMDB" id="EMD-11710"/>
<dbReference type="EMDB" id="EMD-11713"/>
<dbReference type="EMDB" id="EMD-11717"/>
<dbReference type="EMDB" id="EMD-11718"/>
<dbReference type="EMDB" id="EMD-12035"/>
<dbReference type="EMDB" id="EMD-12239"/>
<dbReference type="EMDB" id="EMD-12240"/>
<dbReference type="EMDB" id="EMD-12244"/>
<dbReference type="EMDB" id="EMD-12245"/>
<dbReference type="EMDB" id="EMD-12246"/>
<dbReference type="EMDB" id="EMD-12247"/>
<dbReference type="EMDB" id="EMD-12261"/>
<dbReference type="EMDB" id="EMD-12693"/>
<dbReference type="EMDB" id="EMD-12694"/>
<dbReference type="EMDB" id="EMD-12695"/>
<dbReference type="EMDB" id="EMD-12936"/>
<dbReference type="EMDB" id="EMD-12937"/>
<dbReference type="EMDB" id="EMD-13180"/>
<dbReference type="EMDB" id="EMD-13461"/>
<dbReference type="EMDB" id="EMD-13464"/>
<dbReference type="EMDB" id="EMD-13958"/>
<dbReference type="EMDB" id="EMD-14956"/>
<dbReference type="EMDB" id="EMD-15116"/>
<dbReference type="EMDB" id="EMD-15712"/>
<dbReference type="EMDB" id="EMD-15793"/>
<dbReference type="EMDB" id="EMD-15905"/>
<dbReference type="EMDB" id="EMD-16015"/>
<dbReference type="EMDB" id="EMD-16029"/>
<dbReference type="EMDB" id="EMD-16031"/>
<dbReference type="EMDB" id="EMD-16047"/>
<dbReference type="EMDB" id="EMD-16057"/>
<dbReference type="EMDB" id="EMD-16059"/>
<dbReference type="EMDB" id="EMD-16062"/>
<dbReference type="EMDB" id="EMD-16065"/>
<dbReference type="EMDB" id="EMD-16081"/>
<dbReference type="EMDB" id="EMD-16082"/>
<dbReference type="EMDB" id="EMD-16526"/>
<dbReference type="EMDB" id="EMD-16612"/>
<dbReference type="EMDB" id="EMD-16645"/>
<dbReference type="EMDB" id="EMD-16650"/>
<dbReference type="EMDB" id="EMD-16651"/>
<dbReference type="EMDB" id="EMD-17346"/>
<dbReference type="EMDB" id="EMD-17347"/>
<dbReference type="EMDB" id="EMD-17348"/>
<dbReference type="EMDB" id="EMD-17631"/>
<dbReference type="EMDB" id="EMD-17667"/>
<dbReference type="EMDB" id="EMD-17743"/>
<dbReference type="EMDB" id="EMD-17959"/>
<dbReference type="EMDB" id="EMD-18145"/>
<dbReference type="EMDB" id="EMD-18320"/>
<dbReference type="EMDB" id="EMD-18458"/>
<dbReference type="EMDB" id="EMD-18534"/>
<dbReference type="EMDB" id="EMD-18875"/>
<dbReference type="EMDB" id="EMD-18950"/>
<dbReference type="EMDB" id="EMD-19004"/>
<dbReference type="EMDB" id="EMD-19054"/>
<dbReference type="EMDB" id="EMD-19055"/>
<dbReference type="EMDB" id="EMD-19058"/>
<dbReference type="EMDB" id="EMD-19059"/>
<dbReference type="EMDB" id="EMD-20048"/>
<dbReference type="EMDB" id="EMD-20052"/>
<dbReference type="EMDB" id="EMD-21420"/>
<dbReference type="EMDB" id="EMD-21421"/>
<dbReference type="EMDB" id="EMD-21422"/>
<dbReference type="EMDB" id="EMD-21620"/>
<dbReference type="EMDB" id="EMD-21625"/>
<dbReference type="EMDB" id="EMD-21630"/>
<dbReference type="EMDB" id="EMD-21631"/>
<dbReference type="EMDB" id="EMD-21632"/>
<dbReference type="EMDB" id="EMD-21633"/>
<dbReference type="EMDB" id="EMD-21634"/>
<dbReference type="EMDB" id="EMD-21635"/>
<dbReference type="EMDB" id="EMD-21636"/>
<dbReference type="EMDB" id="EMD-21637"/>
<dbReference type="EMDB" id="EMD-21638"/>
<dbReference type="EMDB" id="EMD-21639"/>
<dbReference type="EMDB" id="EMD-21640"/>
<dbReference type="EMDB" id="EMD-21641"/>
<dbReference type="EMDB" id="EMD-21857"/>
<dbReference type="EMDB" id="EMD-21858"/>
<dbReference type="EMDB" id="EMD-22143"/>
<dbReference type="EMDB" id="EMD-22459"/>
<dbReference type="EMDB" id="EMD-22461"/>
<dbReference type="EMDB" id="EMD-22464"/>
<dbReference type="EMDB" id="EMD-22466"/>
<dbReference type="EMDB" id="EMD-22469"/>
<dbReference type="EMDB" id="EMD-22472"/>
<dbReference type="EMDB" id="EMD-22669"/>
<dbReference type="EMDB" id="EMD-22670"/>
<dbReference type="EMDB" id="EMD-22671"/>
<dbReference type="EMDB" id="EMD-22672"/>
<dbReference type="EMDB" id="EMD-22673"/>
<dbReference type="EMDB" id="EMD-22674"/>
<dbReference type="EMDB" id="EMD-23528"/>
<dbReference type="EMDB" id="EMD-24120"/>
<dbReference type="EMDB" id="EMD-24132"/>
<dbReference type="EMDB" id="EMD-24133"/>
<dbReference type="EMDB" id="EMD-24134"/>
<dbReference type="EMDB" id="EMD-24135"/>
<dbReference type="EMDB" id="EMD-24136"/>
<dbReference type="EMDB" id="EMD-24803"/>
<dbReference type="EMDB" id="EMD-25405"/>
<dbReference type="EMDB" id="EMD-25407"/>
<dbReference type="EMDB" id="EMD-25409"/>
<dbReference type="EMDB" id="EMD-25410"/>
<dbReference type="EMDB" id="EMD-25411"/>
<dbReference type="EMDB" id="EMD-25415"/>
<dbReference type="EMDB" id="EMD-25418"/>
<dbReference type="EMDB" id="EMD-25420"/>
<dbReference type="EMDB" id="EMD-25421"/>
<dbReference type="EMDB" id="EMD-30598"/>
<dbReference type="EMDB" id="EMD-30611"/>
<dbReference type="EMDB" id="EMD-33660"/>
<dbReference type="EMDB" id="EMD-33661"/>
<dbReference type="EMDB" id="EMD-33662"/>
<dbReference type="EMDB" id="EMD-33663"/>
<dbReference type="EMDB" id="EMD-33664"/>
<dbReference type="EMDB" id="EMD-33665"/>
<dbReference type="EMDB" id="EMD-3489"/>
<dbReference type="EMDB" id="EMD-3490"/>
<dbReference type="EMDB" id="EMD-3492"/>
<dbReference type="EMDB" id="EMD-3493"/>
<dbReference type="EMDB" id="EMD-3494"/>
<dbReference type="EMDB" id="EMD-3495"/>
<dbReference type="EMDB" id="EMD-35001"/>
<dbReference type="EMDB" id="EMD-35020"/>
<dbReference type="EMDB" id="EMD-35022"/>
<dbReference type="EMDB" id="EMD-3508"/>
<dbReference type="EMDB" id="EMD-35411"/>
<dbReference type="EMDB" id="EMD-35412"/>
<dbReference type="EMDB" id="EMD-3580"/>
<dbReference type="EMDB" id="EMD-36619"/>
<dbReference type="EMDB" id="EMD-36620"/>
<dbReference type="EMDB" id="EMD-36854"/>
<dbReference type="EMDB" id="EMD-36883"/>
<dbReference type="EMDB" id="EMD-3713"/>
<dbReference type="EMDB" id="EMD-3730"/>
<dbReference type="EMDB" id="EMD-3898"/>
<dbReference type="EMDB" id="EMD-3899"/>
<dbReference type="EMDB" id="EMD-3903"/>
<dbReference type="EMDB" id="EMD-39577"/>
<dbReference type="EMDB" id="EMD-39578"/>
<dbReference type="EMDB" id="EMD-39579"/>
<dbReference type="EMDB" id="EMD-39580"/>
<dbReference type="EMDB" id="EMD-39581"/>
<dbReference type="EMDB" id="EMD-4001"/>
<dbReference type="EMDB" id="EMD-4121"/>
<dbReference type="EMDB" id="EMD-4122"/>
<dbReference type="EMDB" id="EMD-4123"/>
<dbReference type="EMDB" id="EMD-4124"/>
<dbReference type="EMDB" id="EMD-4125"/>
<dbReference type="EMDB" id="EMD-4126"/>
<dbReference type="EMDB" id="EMD-4476"/>
<dbReference type="EMDB" id="EMD-4477"/>
<dbReference type="EMDB" id="EMD-4478"/>
<dbReference type="EMDB" id="EMD-50296"/>
<dbReference type="EMDB" id="EMD-51318"/>
<dbReference type="EMDB" id="EMD-51340"/>
<dbReference type="EMDB" id="EMD-51615"/>
<dbReference type="EMDB" id="EMD-51616"/>
<dbReference type="EMDB" id="EMD-51618"/>
<dbReference type="EMDB" id="EMD-51619"/>
<dbReference type="EMDB" id="EMD-51620"/>
<dbReference type="EMDB" id="EMD-51621"/>
<dbReference type="EMDB" id="EMD-51623"/>
<dbReference type="EMDB" id="EMD-6667"/>
<dbReference type="EMDB" id="EMD-7289"/>
<dbReference type="EMDB" id="EMD-7341"/>
<dbReference type="EMDB" id="EMD-7970"/>
<dbReference type="EMDB" id="EMD-8107"/>
<dbReference type="EMDB" id="EMD-8175"/>
<dbReference type="EMDB" id="EMD-8176"/>
<dbReference type="EMDB" id="EMD-8237"/>
<dbReference type="EMDB" id="EMD-8238"/>
<dbReference type="EMDB" id="EMD-8279"/>
<dbReference type="EMDB" id="EMD-8280"/>
<dbReference type="EMDB" id="EMD-8281"/>
<dbReference type="EMDB" id="EMD-8282"/>
<dbReference type="EMDB" id="EMD-8505"/>
<dbReference type="EMDB" id="EMD-8615"/>
<dbReference type="EMDB" id="EMD-8616"/>
<dbReference type="EMDB" id="EMD-8617"/>
<dbReference type="EMDB" id="EMD-8618"/>
<dbReference type="EMDB" id="EMD-8619"/>
<dbReference type="EMDB" id="EMD-8620"/>
<dbReference type="EMDB" id="EMD-8813"/>
<dbReference type="EMDB" id="EMD-8814"/>
<dbReference type="EMDB" id="EMD-8815"/>
<dbReference type="EMDB" id="EMD-8828"/>
<dbReference type="SMR" id="P68679"/>
<dbReference type="BioGRID" id="4262214">
    <property type="interactions" value="5"/>
</dbReference>
<dbReference type="BioGRID" id="851893">
    <property type="interactions" value="2"/>
</dbReference>
<dbReference type="ComplexPortal" id="CPX-3802">
    <property type="entry name" value="30S small ribosomal subunit"/>
</dbReference>
<dbReference type="DIP" id="DIP-47839N"/>
<dbReference type="FunCoup" id="P68679">
    <property type="interactions" value="728"/>
</dbReference>
<dbReference type="IntAct" id="P68679">
    <property type="interactions" value="42"/>
</dbReference>
<dbReference type="STRING" id="511145.b3065"/>
<dbReference type="jPOST" id="P68679"/>
<dbReference type="PaxDb" id="511145-b3065"/>
<dbReference type="EnsemblBacteria" id="AAC76101">
    <property type="protein sequence ID" value="AAC76101"/>
    <property type="gene ID" value="b3065"/>
</dbReference>
<dbReference type="GeneID" id="947577"/>
<dbReference type="GeneID" id="98390195"/>
<dbReference type="KEGG" id="ecj:JW3037"/>
<dbReference type="KEGG" id="eco:b3065"/>
<dbReference type="KEGG" id="ecoc:C3026_16745"/>
<dbReference type="PATRIC" id="fig|1411691.4.peg.3665"/>
<dbReference type="EchoBASE" id="EB0913"/>
<dbReference type="eggNOG" id="COG0828">
    <property type="taxonomic scope" value="Bacteria"/>
</dbReference>
<dbReference type="HOGENOM" id="CLU_159258_1_0_6"/>
<dbReference type="InParanoid" id="P68679"/>
<dbReference type="OMA" id="HQHFEKP"/>
<dbReference type="OrthoDB" id="9799244at2"/>
<dbReference type="PhylomeDB" id="P68679"/>
<dbReference type="BioCyc" id="EcoCyc:EG10920-MONOMER"/>
<dbReference type="BioCyc" id="MetaCyc:EG10920-MONOMER"/>
<dbReference type="EvolutionaryTrace" id="P68679"/>
<dbReference type="PRO" id="PR:P68679"/>
<dbReference type="Proteomes" id="UP000000625">
    <property type="component" value="Chromosome"/>
</dbReference>
<dbReference type="GO" id="GO:0005737">
    <property type="term" value="C:cytoplasm"/>
    <property type="evidence" value="ECO:0000314"/>
    <property type="project" value="ComplexPortal"/>
</dbReference>
<dbReference type="GO" id="GO:0005829">
    <property type="term" value="C:cytosol"/>
    <property type="evidence" value="ECO:0000314"/>
    <property type="project" value="EcoCyc"/>
</dbReference>
<dbReference type="GO" id="GO:0022627">
    <property type="term" value="C:cytosolic small ribosomal subunit"/>
    <property type="evidence" value="ECO:0000314"/>
    <property type="project" value="CAFA"/>
</dbReference>
<dbReference type="GO" id="GO:0019843">
    <property type="term" value="F:rRNA binding"/>
    <property type="evidence" value="ECO:0007669"/>
    <property type="project" value="UniProtKB-KW"/>
</dbReference>
<dbReference type="GO" id="GO:0003735">
    <property type="term" value="F:structural constituent of ribosome"/>
    <property type="evidence" value="ECO:0000314"/>
    <property type="project" value="CAFA"/>
</dbReference>
<dbReference type="GO" id="GO:0002181">
    <property type="term" value="P:cytoplasmic translation"/>
    <property type="evidence" value="ECO:0000303"/>
    <property type="project" value="ComplexPortal"/>
</dbReference>
<dbReference type="GO" id="GO:0000028">
    <property type="term" value="P:ribosomal small subunit assembly"/>
    <property type="evidence" value="ECO:0000314"/>
    <property type="project" value="CAFA"/>
</dbReference>
<dbReference type="FunFam" id="1.20.5.1150:FF:000001">
    <property type="entry name" value="30S ribosomal protein S21"/>
    <property type="match status" value="1"/>
</dbReference>
<dbReference type="Gene3D" id="1.20.5.1150">
    <property type="entry name" value="Ribosomal protein S8"/>
    <property type="match status" value="1"/>
</dbReference>
<dbReference type="HAMAP" id="MF_00358">
    <property type="entry name" value="Ribosomal_bS21"/>
    <property type="match status" value="1"/>
</dbReference>
<dbReference type="InterPro" id="IPR001911">
    <property type="entry name" value="Ribosomal_bS21"/>
</dbReference>
<dbReference type="InterPro" id="IPR018278">
    <property type="entry name" value="Ribosomal_bS21_CS"/>
</dbReference>
<dbReference type="InterPro" id="IPR038380">
    <property type="entry name" value="Ribosomal_bS21_sf"/>
</dbReference>
<dbReference type="NCBIfam" id="TIGR00030">
    <property type="entry name" value="S21p"/>
    <property type="match status" value="1"/>
</dbReference>
<dbReference type="PANTHER" id="PTHR21109">
    <property type="entry name" value="MITOCHONDRIAL 28S RIBOSOMAL PROTEIN S21"/>
    <property type="match status" value="1"/>
</dbReference>
<dbReference type="PANTHER" id="PTHR21109:SF22">
    <property type="entry name" value="SMALL RIBOSOMAL SUBUNIT PROTEIN BS21"/>
    <property type="match status" value="1"/>
</dbReference>
<dbReference type="Pfam" id="PF01165">
    <property type="entry name" value="Ribosomal_S21"/>
    <property type="match status" value="1"/>
</dbReference>
<dbReference type="PRINTS" id="PR00976">
    <property type="entry name" value="RIBOSOMALS21"/>
</dbReference>
<dbReference type="PROSITE" id="PS01181">
    <property type="entry name" value="RIBOSOMAL_S21"/>
    <property type="match status" value="1"/>
</dbReference>
<comment type="function">
    <text evidence="12">Probbly involved in recognition of ribosome rescue factor SmrB in stalled/collided disomes; fusion of protein fragments to its N-terminus decreases ribosome rescue in the presence of SmrB (PubMed:35264790).</text>
</comment>
<comment type="subunit">
    <text evidence="2 3 4 5 6 7 8 9">Part of the 30S ribosomal subunit (PubMed:10094780, PubMed:16272117, PubMed:27906160, PubMed:27906161, PubMed:27934701, PubMed:7556101, PubMed:765257). In stalled ribosomes contacts ribosome rescue factor SmrB (PubMed:35264790).</text>
</comment>
<comment type="mass spectrometry"/>
<comment type="similarity">
    <text evidence="11">Belongs to the bacterial ribosomal protein bS21 family.</text>
</comment>
<gene>
    <name type="primary">rpsU</name>
    <name type="ordered locus">b3065</name>
    <name type="ordered locus">JW3037</name>
</gene>
<accession>P68679</accession>
<accession>P02379</accession>
<accession>Q2M9E0</accession>
<accession>Q8ZI69</accession>
<protein>
    <recommendedName>
        <fullName evidence="10">Small ribosomal subunit protein bS21</fullName>
    </recommendedName>
    <alternativeName>
        <fullName>30S ribosomal protein S21</fullName>
    </alternativeName>
</protein>
<proteinExistence type="evidence at protein level"/>